<reference key="1">
    <citation type="journal article" date="1990" name="Proc. Natl. Acad. Sci. U.S.A.">
        <title>A gene pair from the human major histocompatibility complex encodes large proline-rich proteins with multiple repeated motifs and a single ubiquitin-like domain.</title>
        <authorList>
            <person name="Banerji J."/>
            <person name="Sands J."/>
            <person name="Strominger J.L."/>
            <person name="Spies T."/>
        </authorList>
    </citation>
    <scope>NUCLEOTIDE SEQUENCE [GENOMIC DNA / MRNA] (ISOFORM 1)</scope>
    <scope>VARIANT PRO-625</scope>
    <scope>REPEAT</scope>
    <source>
        <tissue>T-cell</tissue>
    </source>
</reference>
<reference key="2">
    <citation type="journal article" date="2007" name="BMC Genomics">
        <title>The full-ORF clone resource of the German cDNA consortium.</title>
        <authorList>
            <person name="Bechtel S."/>
            <person name="Rosenfelder H."/>
            <person name="Duda A."/>
            <person name="Schmidt C.P."/>
            <person name="Ernst U."/>
            <person name="Wellenreuther R."/>
            <person name="Mehrle A."/>
            <person name="Schuster C."/>
            <person name="Bahr A."/>
            <person name="Bloecker H."/>
            <person name="Heubner D."/>
            <person name="Hoerlein A."/>
            <person name="Michel G."/>
            <person name="Wedler H."/>
            <person name="Koehrer K."/>
            <person name="Ottenwaelder B."/>
            <person name="Poustka A."/>
            <person name="Wiemann S."/>
            <person name="Schupp I."/>
        </authorList>
    </citation>
    <scope>NUCLEOTIDE SEQUENCE [LARGE SCALE MRNA] (ISOFORM 2)</scope>
    <source>
        <tissue>Endometrium</tissue>
    </source>
</reference>
<reference key="3">
    <citation type="journal article" date="2004" name="Nat. Genet.">
        <title>Complete sequencing and characterization of 21,243 full-length human cDNAs.</title>
        <authorList>
            <person name="Ota T."/>
            <person name="Suzuki Y."/>
            <person name="Nishikawa T."/>
            <person name="Otsuki T."/>
            <person name="Sugiyama T."/>
            <person name="Irie R."/>
            <person name="Wakamatsu A."/>
            <person name="Hayashi K."/>
            <person name="Sato H."/>
            <person name="Nagai K."/>
            <person name="Kimura K."/>
            <person name="Makita H."/>
            <person name="Sekine M."/>
            <person name="Obayashi M."/>
            <person name="Nishi T."/>
            <person name="Shibahara T."/>
            <person name="Tanaka T."/>
            <person name="Ishii S."/>
            <person name="Yamamoto J."/>
            <person name="Saito K."/>
            <person name="Kawai Y."/>
            <person name="Isono Y."/>
            <person name="Nakamura Y."/>
            <person name="Nagahari K."/>
            <person name="Murakami K."/>
            <person name="Yasuda T."/>
            <person name="Iwayanagi T."/>
            <person name="Wagatsuma M."/>
            <person name="Shiratori A."/>
            <person name="Sudo H."/>
            <person name="Hosoiri T."/>
            <person name="Kaku Y."/>
            <person name="Kodaira H."/>
            <person name="Kondo H."/>
            <person name="Sugawara M."/>
            <person name="Takahashi M."/>
            <person name="Kanda K."/>
            <person name="Yokoi T."/>
            <person name="Furuya T."/>
            <person name="Kikkawa E."/>
            <person name="Omura Y."/>
            <person name="Abe K."/>
            <person name="Kamihara K."/>
            <person name="Katsuta N."/>
            <person name="Sato K."/>
            <person name="Tanikawa M."/>
            <person name="Yamazaki M."/>
            <person name="Ninomiya K."/>
            <person name="Ishibashi T."/>
            <person name="Yamashita H."/>
            <person name="Murakawa K."/>
            <person name="Fujimori K."/>
            <person name="Tanai H."/>
            <person name="Kimata M."/>
            <person name="Watanabe M."/>
            <person name="Hiraoka S."/>
            <person name="Chiba Y."/>
            <person name="Ishida S."/>
            <person name="Ono Y."/>
            <person name="Takiguchi S."/>
            <person name="Watanabe S."/>
            <person name="Yosida M."/>
            <person name="Hotuta T."/>
            <person name="Kusano J."/>
            <person name="Kanehori K."/>
            <person name="Takahashi-Fujii A."/>
            <person name="Hara H."/>
            <person name="Tanase T.-O."/>
            <person name="Nomura Y."/>
            <person name="Togiya S."/>
            <person name="Komai F."/>
            <person name="Hara R."/>
            <person name="Takeuchi K."/>
            <person name="Arita M."/>
            <person name="Imose N."/>
            <person name="Musashino K."/>
            <person name="Yuuki H."/>
            <person name="Oshima A."/>
            <person name="Sasaki N."/>
            <person name="Aotsuka S."/>
            <person name="Yoshikawa Y."/>
            <person name="Matsunawa H."/>
            <person name="Ichihara T."/>
            <person name="Shiohata N."/>
            <person name="Sano S."/>
            <person name="Moriya S."/>
            <person name="Momiyama H."/>
            <person name="Satoh N."/>
            <person name="Takami S."/>
            <person name="Terashima Y."/>
            <person name="Suzuki O."/>
            <person name="Nakagawa S."/>
            <person name="Senoh A."/>
            <person name="Mizoguchi H."/>
            <person name="Goto Y."/>
            <person name="Shimizu F."/>
            <person name="Wakebe H."/>
            <person name="Hishigaki H."/>
            <person name="Watanabe T."/>
            <person name="Sugiyama A."/>
            <person name="Takemoto M."/>
            <person name="Kawakami B."/>
            <person name="Yamazaki M."/>
            <person name="Watanabe K."/>
            <person name="Kumagai A."/>
            <person name="Itakura S."/>
            <person name="Fukuzumi Y."/>
            <person name="Fujimori Y."/>
            <person name="Komiyama M."/>
            <person name="Tashiro H."/>
            <person name="Tanigami A."/>
            <person name="Fujiwara T."/>
            <person name="Ono T."/>
            <person name="Yamada K."/>
            <person name="Fujii Y."/>
            <person name="Ozaki K."/>
            <person name="Hirao M."/>
            <person name="Ohmori Y."/>
            <person name="Kawabata A."/>
            <person name="Hikiji T."/>
            <person name="Kobatake N."/>
            <person name="Inagaki H."/>
            <person name="Ikema Y."/>
            <person name="Okamoto S."/>
            <person name="Okitani R."/>
            <person name="Kawakami T."/>
            <person name="Noguchi S."/>
            <person name="Itoh T."/>
            <person name="Shigeta K."/>
            <person name="Senba T."/>
            <person name="Matsumura K."/>
            <person name="Nakajima Y."/>
            <person name="Mizuno T."/>
            <person name="Morinaga M."/>
            <person name="Sasaki M."/>
            <person name="Togashi T."/>
            <person name="Oyama M."/>
            <person name="Hata H."/>
            <person name="Watanabe M."/>
            <person name="Komatsu T."/>
            <person name="Mizushima-Sugano J."/>
            <person name="Satoh T."/>
            <person name="Shirai Y."/>
            <person name="Takahashi Y."/>
            <person name="Nakagawa K."/>
            <person name="Okumura K."/>
            <person name="Nagase T."/>
            <person name="Nomura N."/>
            <person name="Kikuchi H."/>
            <person name="Masuho Y."/>
            <person name="Yamashita R."/>
            <person name="Nakai K."/>
            <person name="Yada T."/>
            <person name="Nakamura Y."/>
            <person name="Ohara O."/>
            <person name="Isogai T."/>
            <person name="Sugano S."/>
        </authorList>
    </citation>
    <scope>NUCLEOTIDE SEQUENCE [LARGE SCALE MRNA] (ISOFORMS 4 AND 5)</scope>
    <scope>VARIANT PRO-625</scope>
    <source>
        <tissue>Testis</tissue>
    </source>
</reference>
<reference key="4">
    <citation type="journal article" date="2003" name="Genome Res.">
        <title>Analysis of the gene-dense major histocompatibility complex class III region and its comparison to mouse.</title>
        <authorList>
            <person name="Xie T."/>
            <person name="Rowen L."/>
            <person name="Aguado B."/>
            <person name="Ahearn M.E."/>
            <person name="Madan A."/>
            <person name="Qin S."/>
            <person name="Campbell R.D."/>
            <person name="Hood L."/>
        </authorList>
    </citation>
    <scope>NUCLEOTIDE SEQUENCE [LARGE SCALE GENOMIC DNA]</scope>
</reference>
<reference key="5">
    <citation type="submission" date="2004-12" db="EMBL/GenBank/DDBJ databases">
        <title>Homo sapiens 2,229,817bp genomic DNA of 6p21.3 HLA class I region.</title>
        <authorList>
            <person name="Hirakawa M."/>
            <person name="Yamaguchi H."/>
            <person name="Imai K."/>
            <person name="Shimada J."/>
            <person name="Shiina S."/>
            <person name="Tamiya G."/>
            <person name="Oka A."/>
            <person name="Inoko H."/>
        </authorList>
    </citation>
    <scope>NUCLEOTIDE SEQUENCE [LARGE SCALE GENOMIC DNA]</scope>
    <scope>VARIANT PRO-625</scope>
</reference>
<reference key="6">
    <citation type="journal article" date="2003" name="Nature">
        <title>The DNA sequence and analysis of human chromosome 6.</title>
        <authorList>
            <person name="Mungall A.J."/>
            <person name="Palmer S.A."/>
            <person name="Sims S.K."/>
            <person name="Edwards C.A."/>
            <person name="Ashurst J.L."/>
            <person name="Wilming L."/>
            <person name="Jones M.C."/>
            <person name="Horton R."/>
            <person name="Hunt S.E."/>
            <person name="Scott C.E."/>
            <person name="Gilbert J.G.R."/>
            <person name="Clamp M.E."/>
            <person name="Bethel G."/>
            <person name="Milne S."/>
            <person name="Ainscough R."/>
            <person name="Almeida J.P."/>
            <person name="Ambrose K.D."/>
            <person name="Andrews T.D."/>
            <person name="Ashwell R.I.S."/>
            <person name="Babbage A.K."/>
            <person name="Bagguley C.L."/>
            <person name="Bailey J."/>
            <person name="Banerjee R."/>
            <person name="Barker D.J."/>
            <person name="Barlow K.F."/>
            <person name="Bates K."/>
            <person name="Beare D.M."/>
            <person name="Beasley H."/>
            <person name="Beasley O."/>
            <person name="Bird C.P."/>
            <person name="Blakey S.E."/>
            <person name="Bray-Allen S."/>
            <person name="Brook J."/>
            <person name="Brown A.J."/>
            <person name="Brown J.Y."/>
            <person name="Burford D.C."/>
            <person name="Burrill W."/>
            <person name="Burton J."/>
            <person name="Carder C."/>
            <person name="Carter N.P."/>
            <person name="Chapman J.C."/>
            <person name="Clark S.Y."/>
            <person name="Clark G."/>
            <person name="Clee C.M."/>
            <person name="Clegg S."/>
            <person name="Cobley V."/>
            <person name="Collier R.E."/>
            <person name="Collins J.E."/>
            <person name="Colman L.K."/>
            <person name="Corby N.R."/>
            <person name="Coville G.J."/>
            <person name="Culley K.M."/>
            <person name="Dhami P."/>
            <person name="Davies J."/>
            <person name="Dunn M."/>
            <person name="Earthrowl M.E."/>
            <person name="Ellington A.E."/>
            <person name="Evans K.A."/>
            <person name="Faulkner L."/>
            <person name="Francis M.D."/>
            <person name="Frankish A."/>
            <person name="Frankland J."/>
            <person name="French L."/>
            <person name="Garner P."/>
            <person name="Garnett J."/>
            <person name="Ghori M.J."/>
            <person name="Gilby L.M."/>
            <person name="Gillson C.J."/>
            <person name="Glithero R.J."/>
            <person name="Grafham D.V."/>
            <person name="Grant M."/>
            <person name="Gribble S."/>
            <person name="Griffiths C."/>
            <person name="Griffiths M.N.D."/>
            <person name="Hall R."/>
            <person name="Halls K.S."/>
            <person name="Hammond S."/>
            <person name="Harley J.L."/>
            <person name="Hart E.A."/>
            <person name="Heath P.D."/>
            <person name="Heathcott R."/>
            <person name="Holmes S.J."/>
            <person name="Howden P.J."/>
            <person name="Howe K.L."/>
            <person name="Howell G.R."/>
            <person name="Huckle E."/>
            <person name="Humphray S.J."/>
            <person name="Humphries M.D."/>
            <person name="Hunt A.R."/>
            <person name="Johnson C.M."/>
            <person name="Joy A.A."/>
            <person name="Kay M."/>
            <person name="Keenan S.J."/>
            <person name="Kimberley A.M."/>
            <person name="King A."/>
            <person name="Laird G.K."/>
            <person name="Langford C."/>
            <person name="Lawlor S."/>
            <person name="Leongamornlert D.A."/>
            <person name="Leversha M."/>
            <person name="Lloyd C.R."/>
            <person name="Lloyd D.M."/>
            <person name="Loveland J.E."/>
            <person name="Lovell J."/>
            <person name="Martin S."/>
            <person name="Mashreghi-Mohammadi M."/>
            <person name="Maslen G.L."/>
            <person name="Matthews L."/>
            <person name="McCann O.T."/>
            <person name="McLaren S.J."/>
            <person name="McLay K."/>
            <person name="McMurray A."/>
            <person name="Moore M.J.F."/>
            <person name="Mullikin J.C."/>
            <person name="Niblett D."/>
            <person name="Nickerson T."/>
            <person name="Novik K.L."/>
            <person name="Oliver K."/>
            <person name="Overton-Larty E.K."/>
            <person name="Parker A."/>
            <person name="Patel R."/>
            <person name="Pearce A.V."/>
            <person name="Peck A.I."/>
            <person name="Phillimore B.J.C.T."/>
            <person name="Phillips S."/>
            <person name="Plumb R.W."/>
            <person name="Porter K.M."/>
            <person name="Ramsey Y."/>
            <person name="Ranby S.A."/>
            <person name="Rice C.M."/>
            <person name="Ross M.T."/>
            <person name="Searle S.M."/>
            <person name="Sehra H.K."/>
            <person name="Sheridan E."/>
            <person name="Skuce C.D."/>
            <person name="Smith S."/>
            <person name="Smith M."/>
            <person name="Spraggon L."/>
            <person name="Squares S.L."/>
            <person name="Steward C.A."/>
            <person name="Sycamore N."/>
            <person name="Tamlyn-Hall G."/>
            <person name="Tester J."/>
            <person name="Theaker A.J."/>
            <person name="Thomas D.W."/>
            <person name="Thorpe A."/>
            <person name="Tracey A."/>
            <person name="Tromans A."/>
            <person name="Tubby B."/>
            <person name="Wall M."/>
            <person name="Wallis J.M."/>
            <person name="West A.P."/>
            <person name="White S.S."/>
            <person name="Whitehead S.L."/>
            <person name="Whittaker H."/>
            <person name="Wild A."/>
            <person name="Willey D.J."/>
            <person name="Wilmer T.E."/>
            <person name="Wood J.M."/>
            <person name="Wray P.W."/>
            <person name="Wyatt J.C."/>
            <person name="Young L."/>
            <person name="Younger R.M."/>
            <person name="Bentley D.R."/>
            <person name="Coulson A."/>
            <person name="Durbin R.M."/>
            <person name="Hubbard T."/>
            <person name="Sulston J.E."/>
            <person name="Dunham I."/>
            <person name="Rogers J."/>
            <person name="Beck S."/>
        </authorList>
    </citation>
    <scope>NUCLEOTIDE SEQUENCE [LARGE SCALE GENOMIC DNA]</scope>
    <scope>VARIANT PRO-625</scope>
</reference>
<reference key="7">
    <citation type="submission" date="2005-07" db="EMBL/GenBank/DDBJ databases">
        <authorList>
            <person name="Mural R.J."/>
            <person name="Istrail S."/>
            <person name="Sutton G.G."/>
            <person name="Florea L."/>
            <person name="Halpern A.L."/>
            <person name="Mobarry C.M."/>
            <person name="Lippert R."/>
            <person name="Walenz B."/>
            <person name="Shatkay H."/>
            <person name="Dew I."/>
            <person name="Miller J.R."/>
            <person name="Flanigan M.J."/>
            <person name="Edwards N.J."/>
            <person name="Bolanos R."/>
            <person name="Fasulo D."/>
            <person name="Halldorsson B.V."/>
            <person name="Hannenhalli S."/>
            <person name="Turner R."/>
            <person name="Yooseph S."/>
            <person name="Lu F."/>
            <person name="Nusskern D.R."/>
            <person name="Shue B.C."/>
            <person name="Zheng X.H."/>
            <person name="Zhong F."/>
            <person name="Delcher A.L."/>
            <person name="Huson D.H."/>
            <person name="Kravitz S.A."/>
            <person name="Mouchard L."/>
            <person name="Reinert K."/>
            <person name="Remington K.A."/>
            <person name="Clark A.G."/>
            <person name="Waterman M.S."/>
            <person name="Eichler E.E."/>
            <person name="Adams M.D."/>
            <person name="Hunkapiller M.W."/>
            <person name="Myers E.W."/>
            <person name="Venter J.C."/>
        </authorList>
    </citation>
    <scope>NUCLEOTIDE SEQUENCE [LARGE SCALE GENOMIC DNA]</scope>
    <scope>VARIANT PRO-625</scope>
</reference>
<reference key="8">
    <citation type="journal article" date="2004" name="Genome Res.">
        <title>The status, quality, and expansion of the NIH full-length cDNA project: the Mammalian Gene Collection (MGC).</title>
        <authorList>
            <consortium name="The MGC Project Team"/>
        </authorList>
    </citation>
    <scope>NUCLEOTIDE SEQUENCE [LARGE SCALE MRNA] (ISOFORM 2)</scope>
    <source>
        <tissue>Kidney</tissue>
    </source>
</reference>
<reference key="9">
    <citation type="journal article" date="2004" name="J. Biol. Chem.">
        <title>Ricin triggers apoptotic morphological changes through caspase-3 cleavage of BAT3.</title>
        <authorList>
            <person name="Wu Y.-H."/>
            <person name="Shih S.-F."/>
            <person name="Lin J.-Y."/>
        </authorList>
    </citation>
    <scope>FUNCTION</scope>
    <scope>SUBCELLULAR LOCATION</scope>
    <scope>INTERACTION WITH RICIN A CHAIN</scope>
    <scope>MUTAGENESIS OF ASP-1001</scope>
    <scope>CLEAVAGE BY CASP3</scope>
</reference>
<reference key="10">
    <citation type="journal article" date="2006" name="Cell">
        <title>Global, in vivo, and site-specific phosphorylation dynamics in signaling networks.</title>
        <authorList>
            <person name="Olsen J.V."/>
            <person name="Blagoev B."/>
            <person name="Gnad F."/>
            <person name="Macek B."/>
            <person name="Kumar C."/>
            <person name="Mortensen P."/>
            <person name="Mann M."/>
        </authorList>
    </citation>
    <scope>IDENTIFICATION BY MASS SPECTROMETRY [LARGE SCALE ANALYSIS]</scope>
    <source>
        <tissue>Cervix carcinoma</tissue>
    </source>
</reference>
<reference key="11">
    <citation type="journal article" date="2006" name="Nat. Biotechnol.">
        <title>A probability-based approach for high-throughput protein phosphorylation analysis and site localization.</title>
        <authorList>
            <person name="Beausoleil S.A."/>
            <person name="Villen J."/>
            <person name="Gerber S.A."/>
            <person name="Rush J."/>
            <person name="Gygi S.P."/>
        </authorList>
    </citation>
    <scope>PHOSPHORYLATION [LARGE SCALE ANALYSIS] AT SER-1117</scope>
    <scope>IDENTIFICATION BY MASS SPECTROMETRY [LARGE SCALE ANALYSIS]</scope>
    <source>
        <tissue>Cervix carcinoma</tissue>
    </source>
</reference>
<reference key="12">
    <citation type="journal article" date="2007" name="Genes Dev.">
        <title>HLA-B-associated transcript 3 (Bat3)/Scythe is essential for p300-mediated acetylation of p53.</title>
        <authorList>
            <person name="Sasaki T."/>
            <person name="Gan E.C."/>
            <person name="Wakeham A."/>
            <person name="Kornbluth S."/>
            <person name="Mak T.W."/>
            <person name="Okada H."/>
        </authorList>
    </citation>
    <scope>FUNCTION</scope>
    <scope>SUBCELLULAR LOCATION</scope>
    <scope>INTERACTION WITH EP300</scope>
</reference>
<reference key="13">
    <citation type="journal article" date="2007" name="Immunity">
        <title>Human leukocyte antigen-B-associated transcript 3 is released from tumor cells and engages the NKp30 receptor on natural killer cells.</title>
        <authorList>
            <person name="Pogge von Strandmann E."/>
            <person name="Simhadri V.R."/>
            <person name="von Tresckow B."/>
            <person name="Sasse S."/>
            <person name="Reiners K.S."/>
            <person name="Hansen H.P."/>
            <person name="Rothe A."/>
            <person name="Boll B."/>
            <person name="Simhadri V.L."/>
            <person name="Borchmann P."/>
            <person name="McKinnon P.J."/>
            <person name="Hallek M."/>
            <person name="Engert A."/>
        </authorList>
    </citation>
    <scope>FUNCTION IN NK CELL ACTIVATION</scope>
    <scope>SUBCELLULAR LOCATION</scope>
</reference>
<reference key="14">
    <citation type="journal article" date="2007" name="J. Proteome Res.">
        <title>Improved titanium dioxide enrichment of phosphopeptides from HeLa cells and high confident phosphopeptide identification by cross-validation of MS/MS and MS/MS/MS spectra.</title>
        <authorList>
            <person name="Yu L.R."/>
            <person name="Zhu Z."/>
            <person name="Chan K.C."/>
            <person name="Issaq H.J."/>
            <person name="Dimitrov D.S."/>
            <person name="Veenstra T.D."/>
        </authorList>
    </citation>
    <scope>PHOSPHORYLATION [LARGE SCALE ANALYSIS] AT SER-113</scope>
    <scope>IDENTIFICATION BY MASS SPECTROMETRY [LARGE SCALE ANALYSIS]</scope>
    <source>
        <tissue>Cervix carcinoma</tissue>
    </source>
</reference>
<reference key="15">
    <citation type="journal article" date="2008" name="J. Proteome Res.">
        <title>Phosphoproteome of resting human platelets.</title>
        <authorList>
            <person name="Zahedi R.P."/>
            <person name="Lewandrowski U."/>
            <person name="Wiesner J."/>
            <person name="Wortelkamp S."/>
            <person name="Moebius J."/>
            <person name="Schuetz C."/>
            <person name="Walter U."/>
            <person name="Gambaryan S."/>
            <person name="Sickmann A."/>
        </authorList>
    </citation>
    <scope>PHOSPHORYLATION [LARGE SCALE ANALYSIS] AT SER-973</scope>
    <scope>IDENTIFICATION BY MASS SPECTROMETRY [LARGE SCALE ANALYSIS]</scope>
    <source>
        <tissue>Platelet</tissue>
    </source>
</reference>
<reference key="16">
    <citation type="journal article" date="2008" name="Mol. Cell. Biol.">
        <title>BAT3 and SET1A form a complex with CTCFL/BORIS to modulate H3K4 histone dimethylation and gene expression.</title>
        <authorList>
            <person name="Nguyen P."/>
            <person name="Bar-Sela G."/>
            <person name="Sun L."/>
            <person name="Bisht K.S."/>
            <person name="Cui H."/>
            <person name="Kohn E."/>
            <person name="Feinberg A.P."/>
            <person name="Gius D."/>
        </authorList>
    </citation>
    <scope>FUNCTION</scope>
    <scope>INTERACTION WITH CTCFL</scope>
</reference>
<reference key="17">
    <citation type="journal article" date="2008" name="PLoS ONE">
        <title>Dendritic cells release HLA-B-associated transcript-3 positive exosomes to regulate natural killer function.</title>
        <authorList>
            <person name="Simhadri V.R."/>
            <person name="Reiners K.S."/>
            <person name="Hansen H.P."/>
            <person name="Topolar D."/>
            <person name="Simhadri V.L."/>
            <person name="Nohroudi K."/>
            <person name="Kufer T.A."/>
            <person name="Engert A."/>
            <person name="Pogge von Strandmann E."/>
        </authorList>
    </citation>
    <scope>FUNCTION IN NK CELL ACTIVATION</scope>
    <scope>SUBCELLULAR LOCATION</scope>
    <scope>TISSUE SPECIFICITY</scope>
</reference>
<reference key="18">
    <citation type="journal article" date="2008" name="Proc. Natl. Acad. Sci. U.S.A.">
        <title>A quantitative atlas of mitotic phosphorylation.</title>
        <authorList>
            <person name="Dephoure N."/>
            <person name="Zhou C."/>
            <person name="Villen J."/>
            <person name="Beausoleil S.A."/>
            <person name="Bakalarski C.E."/>
            <person name="Elledge S.J."/>
            <person name="Gygi S.P."/>
        </authorList>
    </citation>
    <scope>PHOSPHORYLATION [LARGE SCALE ANALYSIS] AT SER-113; SER-973; SER-1081 AND SER-1117</scope>
    <scope>PHOSPHORYLATION [LARGE SCALE ANALYSIS] AT SER-832 (ISOFORM 4)</scope>
    <scope>IDENTIFICATION BY MASS SPECTROMETRY [LARGE SCALE ANALYSIS]</scope>
    <source>
        <tissue>Cervix carcinoma</tissue>
    </source>
</reference>
<reference key="19">
    <citation type="journal article" date="2009" name="Anal. Chem.">
        <title>Lys-N and trypsin cover complementary parts of the phosphoproteome in a refined SCX-based approach.</title>
        <authorList>
            <person name="Gauci S."/>
            <person name="Helbig A.O."/>
            <person name="Slijper M."/>
            <person name="Krijgsveld J."/>
            <person name="Heck A.J."/>
            <person name="Mohammed S."/>
        </authorList>
    </citation>
    <scope>ACETYLATION [LARGE SCALE ANALYSIS] AT MET-1</scope>
    <scope>IDENTIFICATION BY MASS SPECTROMETRY [LARGE SCALE ANALYSIS]</scope>
</reference>
<reference key="20">
    <citation type="journal article" date="2009" name="Sci. Signal.">
        <title>Quantitative phosphoproteomic analysis of T cell receptor signaling reveals system-wide modulation of protein-protein interactions.</title>
        <authorList>
            <person name="Mayya V."/>
            <person name="Lundgren D.H."/>
            <person name="Hwang S.-I."/>
            <person name="Rezaul K."/>
            <person name="Wu L."/>
            <person name="Eng J.K."/>
            <person name="Rodionov V."/>
            <person name="Han D.K."/>
        </authorList>
    </citation>
    <scope>PHOSPHORYLATION [LARGE SCALE ANALYSIS] AT SER-964 AND SER-973</scope>
    <scope>IDENTIFICATION BY MASS SPECTROMETRY [LARGE SCALE ANALYSIS]</scope>
    <source>
        <tissue>Leukemic T-cell</tissue>
    </source>
</reference>
<reference key="21">
    <citation type="journal article" date="2010" name="Infect. Immun.">
        <title>E3 ubiquitin ligase activity and targeting of BAT3 by multiple Legionella pneumophila translocated substrates.</title>
        <authorList>
            <person name="Ensminger A.W."/>
            <person name="Isberg R.R."/>
        </authorList>
    </citation>
    <scope>UBIQUITINATION IN CASE OF INFECTION BY L.PNEUMOPHILA (MICROBIAL INFECTION)</scope>
    <scope>INTERACTION WITH LPG2160 AND LEGU1 (MICROBIAL INFECTION)</scope>
</reference>
<reference key="22">
    <citation type="journal article" date="2010" name="J. Cell Sci.">
        <title>Bat3 promotes the membrane integration of tail-anchored proteins.</title>
        <authorList>
            <person name="Leznicki P."/>
            <person name="Clancy A."/>
            <person name="Schwappach B."/>
            <person name="High S."/>
        </authorList>
    </citation>
    <scope>FUNCTION</scope>
</reference>
<reference key="23">
    <citation type="journal article" date="2010" name="Nature">
        <title>A ribosome-associating factor chaperones tail-anchored membrane proteins.</title>
        <authorList>
            <person name="Mariappan M."/>
            <person name="Li X."/>
            <person name="Stefanovic S."/>
            <person name="Sharma A."/>
            <person name="Mateja A."/>
            <person name="Keenan R.J."/>
            <person name="Hegde R.S."/>
        </authorList>
    </citation>
    <scope>FUNCTION</scope>
    <scope>SUBCELLULAR LOCATION</scope>
    <scope>RIBOSOME-BINDING</scope>
    <scope>IDENTIFICATION BY MASS SPECTROMETRY</scope>
    <scope>IDENTIFICATION IN THE BAG6/BAT3 COMPLEX</scope>
</reference>
<reference key="24">
    <citation type="journal article" date="2010" name="Sci. Signal.">
        <title>Quantitative phosphoproteomics reveals widespread full phosphorylation site occupancy during mitosis.</title>
        <authorList>
            <person name="Olsen J.V."/>
            <person name="Vermeulen M."/>
            <person name="Santamaria A."/>
            <person name="Kumar C."/>
            <person name="Miller M.L."/>
            <person name="Jensen L.J."/>
            <person name="Gnad F."/>
            <person name="Cox J."/>
            <person name="Jensen T.S."/>
            <person name="Nigg E.A."/>
            <person name="Brunak S."/>
            <person name="Mann M."/>
        </authorList>
    </citation>
    <scope>PHOSPHORYLATION [LARGE SCALE ANALYSIS] AT THR-350; SER-964; SER-973 AND SER-1117</scope>
    <scope>IDENTIFICATION BY MASS SPECTROMETRY [LARGE SCALE ANALYSIS]</scope>
    <source>
        <tissue>Cervix carcinoma</tissue>
    </source>
</reference>
<reference key="25">
    <citation type="journal article" date="2011" name="BMC Syst. Biol.">
        <title>Initial characterization of the human central proteome.</title>
        <authorList>
            <person name="Burkard T.R."/>
            <person name="Planyavsky M."/>
            <person name="Kaupe I."/>
            <person name="Breitwieser F.P."/>
            <person name="Buerckstuemmer T."/>
            <person name="Bennett K.L."/>
            <person name="Superti-Furga G."/>
            <person name="Colinge J."/>
        </authorList>
    </citation>
    <scope>IDENTIFICATION BY MASS SPECTROMETRY [LARGE SCALE ANALYSIS]</scope>
</reference>
<reference key="26">
    <citation type="journal article" date="2011" name="Mol. Cell">
        <title>A ubiquitin ligase-associated chaperone holdase maintains polypeptides in soluble states for proteasome degradation.</title>
        <authorList>
            <person name="Wang Q."/>
            <person name="Liu Y."/>
            <person name="Soetandyo N."/>
            <person name="Baek K."/>
            <person name="Hegde R."/>
            <person name="Ye Y."/>
        </authorList>
    </citation>
    <scope>FUNCTION</scope>
    <scope>INTERACTION WITH AMFR; GET4; SYVN1 AND VCP</scope>
    <scope>SUBCELLULAR LOCATION</scope>
</reference>
<reference key="27">
    <citation type="journal article" date="2011" name="Nature">
        <title>Protein targeting and degradation are coupled for elimination of mislocalized proteins.</title>
        <authorList>
            <person name="Hessa T."/>
            <person name="Sharma A."/>
            <person name="Mariappan M."/>
            <person name="Eshleman H.D."/>
            <person name="Gutierrez E."/>
            <person name="Hegde R.S."/>
        </authorList>
    </citation>
    <scope>FUNCTION</scope>
    <scope>DOMAIN</scope>
</reference>
<reference key="28">
    <citation type="journal article" date="2011" name="Sci. Signal.">
        <title>System-wide temporal characterization of the proteome and phosphoproteome of human embryonic stem cell differentiation.</title>
        <authorList>
            <person name="Rigbolt K.T."/>
            <person name="Prokhorova T.A."/>
            <person name="Akimov V."/>
            <person name="Henningsen J."/>
            <person name="Johansen P.T."/>
            <person name="Kratchmarova I."/>
            <person name="Kassem M."/>
            <person name="Mann M."/>
            <person name="Olsen J.V."/>
            <person name="Blagoev B."/>
        </authorList>
    </citation>
    <scope>PHOSPHORYLATION [LARGE SCALE ANALYSIS] AT SER-964 AND SER-973</scope>
    <scope>IDENTIFICATION BY MASS SPECTROMETRY [LARGE SCALE ANALYSIS]</scope>
</reference>
<reference key="29">
    <citation type="journal article" date="2012" name="Proc. Natl. Acad. Sci. U.S.A.">
        <title>SGTA antagonizes BAG6-mediated protein triage.</title>
        <authorList>
            <person name="Leznicki P."/>
            <person name="High S."/>
        </authorList>
    </citation>
    <scope>FUNCTION</scope>
    <scope>INTERACTION WITH SGTA</scope>
</reference>
<reference key="30">
    <citation type="journal article" date="2013" name="J. Proteome Res.">
        <title>Toward a comprehensive characterization of a human cancer cell phosphoproteome.</title>
        <authorList>
            <person name="Zhou H."/>
            <person name="Di Palma S."/>
            <person name="Preisinger C."/>
            <person name="Peng M."/>
            <person name="Polat A.N."/>
            <person name="Heck A.J."/>
            <person name="Mohammed S."/>
        </authorList>
    </citation>
    <scope>PHOSPHORYLATION [LARGE SCALE ANALYSIS] AT SER-113; SER-964; SER-973; THR-1053; SER-1081 AND SER-1117</scope>
    <scope>IDENTIFICATION BY MASS SPECTROMETRY [LARGE SCALE ANALYSIS]</scope>
    <source>
        <tissue>Cervix carcinoma</tissue>
        <tissue>Erythroleukemia</tissue>
    </source>
</reference>
<reference key="31">
    <citation type="journal article" date="2014" name="Biochem. J.">
        <title>Signal-peptide-mediated translocation is regulated by a p97-AIRAPL complex.</title>
        <authorList>
            <person name="Glinka T."/>
            <person name="Alter J."/>
            <person name="Braunstein I."/>
            <person name="Tzach L."/>
            <person name="Wei Sheng C."/>
            <person name="Geifman S."/>
            <person name="Edelmann M.J."/>
            <person name="Kessler B.M."/>
            <person name="Stanhill A."/>
        </authorList>
    </citation>
    <scope>INTERACTION WITH ZFAND2B</scope>
</reference>
<reference key="32">
    <citation type="journal article" date="2014" name="Elife">
        <title>USP13 antagonizes gp78 to maintain functionality of a chaperone in ER-associated degradation.</title>
        <authorList>
            <person name="Liu Y."/>
            <person name="Soetandyo N."/>
            <person name="Lee J.G."/>
            <person name="Liu L."/>
            <person name="Xu Y."/>
            <person name="Clemons W.M. Jr."/>
            <person name="Ye Y."/>
        </authorList>
    </citation>
    <scope>INTERACTION WITH SGTA AND USP13</scope>
</reference>
<reference key="33">
    <citation type="journal article" date="2014" name="J. Cell Sci.">
        <title>SGTA regulates the cytosolic quality control of hydrophobic substrates.</title>
        <authorList>
            <person name="Wunderley L."/>
            <person name="Leznicki P."/>
            <person name="Payapilly A."/>
            <person name="High S."/>
        </authorList>
    </citation>
    <scope>FUNCTION</scope>
    <scope>INTERACTION WITH SGTA</scope>
</reference>
<reference key="34">
    <citation type="journal article" date="2014" name="J. Proteomics">
        <title>An enzyme assisted RP-RPLC approach for in-depth analysis of human liver phosphoproteome.</title>
        <authorList>
            <person name="Bian Y."/>
            <person name="Song C."/>
            <person name="Cheng K."/>
            <person name="Dong M."/>
            <person name="Wang F."/>
            <person name="Huang J."/>
            <person name="Sun D."/>
            <person name="Wang L."/>
            <person name="Ye M."/>
            <person name="Zou H."/>
        </authorList>
    </citation>
    <scope>PHOSPHORYLATION [LARGE SCALE ANALYSIS] AT SER-96 AND THR-117</scope>
    <scope>IDENTIFICATION BY MASS SPECTROMETRY [LARGE SCALE ANALYSIS]</scope>
    <source>
        <tissue>Liver</tissue>
    </source>
</reference>
<reference key="35">
    <citation type="journal article" date="2014" name="Mol. Cell">
        <title>Cytosolic quality control of mislocalized proteins requires RNF126 recruitment to Bag6.</title>
        <authorList>
            <person name="Rodrigo-Brenni M.C."/>
            <person name="Gutierrez E."/>
            <person name="Hegde R.S."/>
        </authorList>
    </citation>
    <scope>FUNCTION</scope>
    <scope>INTERACTION WITH RNF126</scope>
    <scope>DOMAIN</scope>
</reference>
<reference key="36">
    <citation type="journal article" date="2015" name="Cell Rep.">
        <title>Pre-emptive quality control protects the ER from protein overload via the proximity of ERAD components and SRP.</title>
        <authorList>
            <person name="Kadowaki H."/>
            <person name="Nagai A."/>
            <person name="Maruyama T."/>
            <person name="Takami Y."/>
            <person name="Satrimafitrah P."/>
            <person name="Kato H."/>
            <person name="Honda A."/>
            <person name="Hatta T."/>
            <person name="Natsume T."/>
            <person name="Sato T."/>
            <person name="Kai H."/>
            <person name="Ichijo H."/>
            <person name="Nishitoh H."/>
        </authorList>
    </citation>
    <scope>FUNCTION</scope>
</reference>
<reference key="37">
    <citation type="journal article" date="2015" name="Mol. Biol. Cell">
        <title>Proteasomal degradation of preemptive quality control (pQC) substrates is mediated by an AIRAPL-p97 complex.</title>
        <authorList>
            <person name="Braunstein I."/>
            <person name="Zach L."/>
            <person name="Allan S."/>
            <person name="Kalies K.U."/>
            <person name="Stanhill A."/>
        </authorList>
    </citation>
    <scope>INTERACTION WITH ZFAND2B</scope>
</reference>
<reference key="38">
    <citation type="journal article" date="2015" name="Proteomics">
        <title>N-terminome analysis of the human mitochondrial proteome.</title>
        <authorList>
            <person name="Vaca Jacome A.S."/>
            <person name="Rabilloud T."/>
            <person name="Schaeffer-Reiss C."/>
            <person name="Rompais M."/>
            <person name="Ayoub D."/>
            <person name="Lane L."/>
            <person name="Bairoch A."/>
            <person name="Van Dorsselaer A."/>
            <person name="Carapito C."/>
        </authorList>
    </citation>
    <scope>IDENTIFICATION BY MASS SPECTROMETRY [LARGE SCALE ANALYSIS]</scope>
</reference>
<reference key="39">
    <citation type="journal article" date="2016" name="EMBO Rep.">
        <title>UBQLN4 recognizes mislocalized transmembrane domain proteins and targets these to proteasomal degradation.</title>
        <authorList>
            <person name="Suzuki R."/>
            <person name="Kawahara H."/>
        </authorList>
    </citation>
    <scope>INTERACTION WITH UBQLN4</scope>
</reference>
<reference key="40">
    <citation type="journal article" date="2016" name="Nat. Med.">
        <title>Loss of the proteostasis factor AIRAPL causes myeloid transformation by deregulating IGF-1 signaling.</title>
        <authorList>
            <person name="Osorio F.G."/>
            <person name="Soria-Valles C."/>
            <person name="Santiago-Fernandez O."/>
            <person name="Bernal T."/>
            <person name="Mittelbrunn M."/>
            <person name="Colado E."/>
            <person name="Rodriguez F."/>
            <person name="Bonzon-Kulichenko E."/>
            <person name="Vazquez J."/>
            <person name="Porta-de-la-Riva M."/>
            <person name="Ceron J."/>
            <person name="Fueyo A."/>
            <person name="Li J."/>
            <person name="Green A.R."/>
            <person name="Freije J.M."/>
            <person name="Lopez-Otin C."/>
        </authorList>
    </citation>
    <scope>FUNCTION</scope>
</reference>
<reference key="41">
    <citation type="journal article" date="2017" name="Science">
        <title>Mechanistic basis for a molecular triage reaction.</title>
        <authorList>
            <person name="Shao S."/>
            <person name="Rodrigo-Brenni M.C."/>
            <person name="Kivlen M.H."/>
            <person name="Hegde R.S."/>
        </authorList>
    </citation>
    <scope>FUNCTION</scope>
    <scope>DOMAIN</scope>
    <scope>REGION</scope>
</reference>
<reference key="42">
    <citation type="submission" date="2005-07" db="PDB data bank">
        <title>Solution structure of the N-terminal ubiquitin-like domain in the human BAT3 protein.</title>
        <authorList>
            <consortium name="RIKEN structural genomics initiative (RSGI)"/>
        </authorList>
    </citation>
    <scope>STRUCTURE BY NMR OF 17-89</scope>
</reference>
<reference evidence="44" key="43">
    <citation type="journal article" date="2015" name="J. Biol. Chem.">
        <title>Structure of a BAG6 (Bcl-2-associated athanogene 6)-Ubl4a (ubiquitin-like protein 4a) complex reveals a novel binding interface that functions in tail-anchored protein biogenesis.</title>
        <authorList>
            <person name="Kuwabara N."/>
            <person name="Minami R."/>
            <person name="Yokota N."/>
            <person name="Matsumoto H."/>
            <person name="Senda T."/>
            <person name="Kawahara H."/>
            <person name="Kato R."/>
        </authorList>
    </citation>
    <scope>X-RAY CRYSTALLOGRAPHY (1.85 ANGSTROMS) OF 1048-1123 IN COMPLEX WITH UBL4A</scope>
    <scope>INTERACTION WITH UBL4A</scope>
    <scope>MUTAGENESIS OF VAL-1067; PRO-1078; LEU-1085 AND ASP-1088</scope>
</reference>
<reference evidence="43" key="44">
    <citation type="journal article" date="2015" name="Proc. Natl. Acad. Sci. U.S.A.">
        <title>Bag6 complex contains a minimal tail-anchor-targeting module and a mock BAG domain.</title>
        <authorList>
            <person name="Mock J.Y."/>
            <person name="Chartron J.W."/>
            <person name="Zaslaver M."/>
            <person name="Xu Y."/>
            <person name="Ye Y."/>
            <person name="Clemons W.M. Jr."/>
        </authorList>
    </citation>
    <scope>X-RAY CRYSTALLOGRAPHY (2.00 ANGSTROMS) OF 1060-1111 IN COMPLEX WITH UBL4A</scope>
    <scope>INTERACTION WITH GET4 AND UBL4A</scope>
    <scope>FUNCTION</scope>
    <scope>IDENTIFICATION IN THE BAG6/BAT3 COMPLEX</scope>
</reference>
<reference key="45">
    <citation type="journal article" date="2016" name="Sci. Rep.">
        <title>Structural and functional insights into the E3 ligase, RNF126.</title>
        <authorList>
            <person name="Krysztofinska E.M."/>
            <person name="Martinez-Lumbreras S."/>
            <person name="Thapaliya A."/>
            <person name="Evans N.J."/>
            <person name="High S."/>
            <person name="Isaacson R.L."/>
        </authorList>
    </citation>
    <scope>STRUCTURE BY NMR OF 17-101 IN COMPLEX WITH RNF126</scope>
    <scope>FUNCTION</scope>
    <scope>INTERACTION WITH RNF126 AND SGTA</scope>
    <scope>DOMAIN</scope>
</reference>
<reference evidence="45" key="46">
    <citation type="journal article" date="2017" name="Proc. Natl. Acad. Sci. U.S.A.">
        <title>Structural basis for regulation of the nucleo-cytoplasmic distribution of Bag6 by TRC35.</title>
        <authorList>
            <person name="Mock J.Y."/>
            <person name="Xu Y."/>
            <person name="Ye Y."/>
            <person name="Clemons W.M. Jr."/>
        </authorList>
    </citation>
    <scope>X-RAY CRYSTALLOGRAPHY (1.80 ANGSTROMS) OF 1008-1050 IN COMPLEX WITH GET4</scope>
    <scope>SUBCELLULAR LOCATION</scope>
    <scope>INTERACTION WITH GET4 AND KPNA2</scope>
    <scope>MUTAGENESIS OF TRP-1010; TRP-1018; 1030-ARG-LYS-1031; TYR-1042 AND 1049-LYS-ARG-1050</scope>
</reference>
<reference evidence="46 47 48" key="47">
    <citation type="journal article" date="2021" name="Nat. Struct. Mol. Biol.">
        <title>Structural insights into metazoan pretargeting GET complexes.</title>
        <authorList>
            <person name="Keszei A.F.A."/>
            <person name="Yip M.C.J."/>
            <person name="Hsieh T.C."/>
            <person name="Shao S."/>
        </authorList>
    </citation>
    <scope>STRUCTURE BY ELECTRON MICROSCOPY (3.30 ANGSTROMS) OF 1004-1132 IN COMPLEX WITH GET4; UBL4A AND GET3</scope>
</reference>
<organism>
    <name type="scientific">Homo sapiens</name>
    <name type="common">Human</name>
    <dbReference type="NCBI Taxonomy" id="9606"/>
    <lineage>
        <taxon>Eukaryota</taxon>
        <taxon>Metazoa</taxon>
        <taxon>Chordata</taxon>
        <taxon>Craniata</taxon>
        <taxon>Vertebrata</taxon>
        <taxon>Euteleostomi</taxon>
        <taxon>Mammalia</taxon>
        <taxon>Eutheria</taxon>
        <taxon>Euarchontoglires</taxon>
        <taxon>Primates</taxon>
        <taxon>Haplorrhini</taxon>
        <taxon>Catarrhini</taxon>
        <taxon>Hominidae</taxon>
        <taxon>Homo</taxon>
    </lineage>
</organism>
<accession>P46379</accession>
<accession>A2ADJ7</accession>
<accession>A3KQ42</accession>
<accession>A3KQ44</accession>
<accession>A6NGY6</accession>
<accession>A6PWF7</accession>
<accession>B0UX84</accession>
<accession>B4DZ12</accession>
<accession>B4E3V4</accession>
<accession>E7EMZ4</accession>
<accession>F8VXY4</accession>
<accession>O95874</accession>
<accession>Q5HYL9</accession>
<accession>Q5SQ35</accession>
<accession>Q5SQ36</accession>
<accession>Q5SQ37</accession>
<accession>Q5SQ41</accession>
<accession>Q5SRP8</accession>
<accession>Q5SRP9</accession>
<accession>Q5STC1</accession>
<accession>Q5STX1</accession>
<accession>Q5STX3</accession>
<accession>Q96SA6</accession>
<accession>Q9BCN4</accession>
<keyword id="KW-0002">3D-structure</keyword>
<keyword id="KW-0007">Acetylation</keyword>
<keyword id="KW-0025">Alternative splicing</keyword>
<keyword id="KW-0053">Apoptosis</keyword>
<keyword id="KW-0143">Chaperone</keyword>
<keyword id="KW-0156">Chromatin regulator</keyword>
<keyword id="KW-0963">Cytoplasm</keyword>
<keyword id="KW-0221">Differentiation</keyword>
<keyword id="KW-0391">Immunity</keyword>
<keyword id="KW-0539">Nucleus</keyword>
<keyword id="KW-0597">Phosphoprotein</keyword>
<keyword id="KW-1267">Proteomics identification</keyword>
<keyword id="KW-1185">Reference proteome</keyword>
<keyword id="KW-0677">Repeat</keyword>
<keyword id="KW-0964">Secreted</keyword>
<keyword id="KW-0744">Spermatogenesis</keyword>
<keyword id="KW-0813">Transport</keyword>
<keyword id="KW-0832">Ubl conjugation</keyword>
<name>BAG6_HUMAN</name>
<gene>
    <name evidence="42" type="primary">BAG6</name>
    <name evidence="38" type="synonym">BAT3</name>
    <name type="synonym">G3</name>
</gene>
<sequence>MEPNDSTSTAVEEPDSLEVLVKTLDSQTRTFIVGAQMNVKEFKEHIAASVSIPSEKQRLIYQGRVLQDDKKLQEYNVGGKVIHLVERAPPQTHLPSGASSGTGSASATHGGGSPPGTRGPGASVHDRNANSYVMVGTFNLPSDGSAVDVHINMEQAPIQSEPRVRLVMAQHMIRDIQTLLSRMETLPYLQCRGGPQPQHSQPPPQPPAVTPEPVALSSQTSEPVESEAPPREPMEAEEVEERAPAQNPELTPGPAPAGPTPAPETNAPNHPSPAEYVEVLQELQRLESRLQPFLQRYYEVLGAAATTDYNNNHEGREEDQRLINLVGESLRLLGNTFVALSDLRCNLACTPPRHLHVVRPMSHYTTPMVLQQAAIPIQINVGTTVTMTGNGTRPPPTPNAEAPPPGPGQASSVAPSSTNVESSAEGAPPPGPAPPPATSHPRVIRISHQSVEPVVMMHMNIQDSGTQPGGVPSAPTGPLGPPGHGQTLGQQVPGFPTAPTRVVIARPTPPQARPSHPGGPPVSGTLQGAGLGTNASLAQMVSGLVGQLLMQPVLVAQGTPGMAPPPAPATASASAGTTNTATTAGPAPGGPAQPPPTPQPSMADLQFSQLLGNLLGPAGPGAGGSGVASPTITVAMPGVPAFLQGMTDFLQATQTAPPPPPPPPPPPPAPEQQTMPPPGSPSGGAGSPGGLGLESLSPEFFTSVVQGVLSSLLGSLGARAGSSESIAAFIQRLSGSSNIFEPGADGALGFFGALLSLLCQNFSMVDVVMLLHGHFQPLQRLQPQLRSFFHQHYLGGQEPTPSNIRMATHTLITGLEEYVRESFSLVQVQPGVDIIRTNLEFLQEQFNSIAAHVLHCTDSGFGARLLELCNQGLFECLALNLHCLGGQQMELAAVINGRIRRMSRGVNPSLVSWLTTMMGLRLQVVLEHMPVGPDAILRYVRRVGDPPQPLPEEPMEVQGAERASPEPQRENASPAPGTTAEEAMSRGPPPAPEGGSRDEQDGASAETEPWAAAVPPEWVPIIQQDIQSQRKVKPQPPLSDAYLSGMPAKRRKTMQGEGPQLLLSEAVSRAAKAAGARPLTSPESLSRDLEAPEVQESYRQQLRSDIQKRLQEDPNYSPQRFPNAQRAFADDP</sequence>
<protein>
    <recommendedName>
        <fullName evidence="39">Large proline-rich protein BAG6</fullName>
    </recommendedName>
    <alternativeName>
        <fullName>BAG family molecular chaperone regulator 6</fullName>
    </alternativeName>
    <alternativeName>
        <fullName evidence="42">BCL2-associated athanogene 6</fullName>
        <shortName>BAG-6</shortName>
    </alternativeName>
    <alternativeName>
        <fullName evidence="38">HLA-B-associated transcript 3</fullName>
    </alternativeName>
    <alternativeName>
        <fullName>Protein G3</fullName>
    </alternativeName>
    <alternativeName>
        <fullName evidence="36">Protein Scythe</fullName>
    </alternativeName>
</protein>
<proteinExistence type="evidence at protein level"/>
<comment type="function">
    <text evidence="1 11 13 15 16 17 20 21 25 26 28 29">ATP-independent molecular chaperone preventing the aggregation of misfolded and hydrophobic patches-containing proteins (PubMed:21636303). Functions as part of a cytosolic protein quality control complex, the BAG6/BAT3 complex, which maintains these client proteins in a soluble state and participates in their proper delivery to the endoplasmic reticulum or alternatively can promote their sorting to the proteasome where they undergo degradation (PubMed:20516149, PubMed:21636303, PubMed:21743475, PubMed:28104892). The BAG6/BAT3 complex is involved in the post-translational delivery of tail-anchored/type II transmembrane proteins to the endoplasmic reticulum membrane. Recruited to ribosomes, it interacts with the transmembrane region of newly synthesized tail-anchored proteins and together with SGTA and ASNA1 mediates their delivery to the endoplasmic reticulum (PubMed:20516149, PubMed:20676083, PubMed:25535373, PubMed:28104892). Client proteins that cannot be properly delivered to the endoplasmic reticulum are ubiquitinated by RNF126, an E3 ubiquitin-protein ligase associated with BAG6 and are sorted to the proteasome (PubMed:24981174, PubMed:27193484, PubMed:28104892). SGTA which prevents the recruitment of RNF126 to BAG6 may negatively regulate the ubiquitination and the proteasomal degradation of client proteins (PubMed:23129660, PubMed:25179605, PubMed:27193484). Similarly, the BAG6/BAT3 complex also functions as a sorting platform for proteins of the secretory pathway that are mislocalized to the cytosol either delivering them to the proteasome for degradation or to the endoplasmic reticulum (PubMed:21743475). The BAG6/BAT3 complex also plays a role in the endoplasmic reticulum-associated degradation (ERAD), a quality control mechanism that eliminates unwanted proteins of the endoplasmic reticulum through their retrotranslocation to the cytosol and their targeting to the proteasome. It maintains these retrotranslocated proteins in an unfolded yet soluble state condition in the cytosol to ensure their proper delivery to the proteasome (PubMed:21636303). BAG6 is also required for selective ubiquitin-mediated degradation of defective nascent chain polypeptides by the proteasome. In this context, it may participate in the production of antigenic peptides and play a role in antigen presentation in immune response (By similarity). BAG6 is also involved in endoplasmic reticulum stress-induced pre-emptive quality control, a mechanism that selectively attenuates the translocation of newly synthesized proteins into the endoplasmic reticulum and reroutes them to the cytosol for proteasomal degradation. BAG6 may ensure the proper degradation of these proteins and thereby protects the endoplasmic reticulum from protein overload upon stress (PubMed:26565908). By inhibiting the polyubiquitination and subsequent proteasomal degradation of HSPA2 it may also play a role in the assembly of the synaptonemal complex during spermatogenesis (By similarity). Also positively regulates apoptosis by interacting with and stabilizing the proapoptotic factor AIFM1 (By similarity). By controlling the steady-state expression of the IGF1R receptor, indirectly regulates the insulin-like growth factor receptor signaling pathway (PubMed:26692333).</text>
</comment>
<comment type="function">
    <text evidence="7 9">Involved in DNA damage-induced apoptosis: following DNA damage, accumulates in the nucleus and forms a complex with p300/EP300, enhancing p300/EP300-mediated p53/TP53 acetylation leading to increase p53/TP53 transcriptional activity (PubMed:17403783). When nuclear, may also act as a component of some chromatin regulator complex that regulates histone 3 'Lys-4' dimethylation (H3K4me2) (PubMed:18765639).</text>
</comment>
<comment type="function">
    <text evidence="8 10">Released extracellularly via exosomes, it is a ligand of the natural killer/NK cells receptor NCR3 and stimulates NK cells cytotoxicity. It may thereby trigger NK cells cytotoxicity against neighboring tumor cells and immature myeloid dendritic cells (DC).</text>
</comment>
<comment type="function">
    <text evidence="6">Mediates ricin-induced apoptosis.</text>
</comment>
<comment type="subunit">
    <text evidence="1 6 7 9 13 15 17 18 19 20 21 23 24 27 28 30 31">Component of the BAG6/BAT3 complex, also named BAT3 complex, at least composed of BAG6, UBL4A and GET4/TRC35 (PubMed:20676083, PubMed:34887561). Interacts with GET4; the interaction is direct and localizes BAG6 in the cytosol (PubMed:21636303, PubMed:29042515). Interacts with UBL4A; the interaction is direct and required for UBL4A protein stability (PubMed:25713138). Interacts with AIFM1 (By similarity). Interacts with HSPA2 (By similarity). Interacts with CTCFL (PubMed:18765639). Interacts with p300/EP300 (PubMed:17403783). Interacts (via ubiquitin-like domain) with RNF126; required for BAG6-dependent ubiquitination of proteins mislocalized to the cytosol (PubMed:24981174, PubMed:27193484). Interacts (via ubiquitin-like domain) with SGTA; SGTA competes with RNF126 by binding the same region of BAG6, thereby promoting deubiquitination of BAG6-target proteins and rescuing them from degradation (PubMed:23129660, PubMed:24424410, PubMed:25179605, PubMed:27193484). Interacts with ricin A chain (PubMed:14960581). Interacts with VCP and AMFR; both form the VCP/p97-AMFR/gp78 complex (PubMed:21636303). Interacts with SYVN1 (PubMed:21636303). Interacts with USP13; the interaction is direct and may mediate UBL4A deubiquitination (PubMed:24424410). Interacts with ZFAND2B (PubMed:24160817, PubMed:26337389). Interacts with KPNA2 (PubMed:29042515). Interacts with UBQLN4 (PubMed:27113755).</text>
</comment>
<comment type="subunit">
    <text evidence="12">(Microbial infection) Interacts with L.pneumophila Lpg2160 and LegU1 proteins.</text>
</comment>
<comment type="interaction">
    <interactant intactId="EBI-347552">
        <id>P46379</id>
    </interactant>
    <interactant intactId="EBI-536772">
        <id>Q12805</id>
        <label>EFEMP1</label>
    </interactant>
    <organismsDiffer>false</organismsDiffer>
    <experiments>4</experiments>
</comment>
<comment type="interaction">
    <interactant intactId="EBI-347552">
        <id>P46379</id>
    </interactant>
    <interactant intactId="EBI-10175124">
        <id>Q8IZU0</id>
        <label>FAM9B</label>
    </interactant>
    <organismsDiffer>false</organismsDiffer>
    <experiments>3</experiments>
</comment>
<comment type="interaction">
    <interactant intactId="EBI-347552">
        <id>P46379</id>
    </interactant>
    <interactant intactId="EBI-740929">
        <id>Q53G59</id>
        <label>KLHL12</label>
    </interactant>
    <organismsDiffer>false</organismsDiffer>
    <experiments>4</experiments>
</comment>
<comment type="interaction">
    <interactant intactId="EBI-347552">
        <id>P46379</id>
    </interactant>
    <interactant intactId="EBI-995373">
        <id>Q7Z434</id>
        <label>MAVS</label>
    </interactant>
    <organismsDiffer>false</organismsDiffer>
    <experiments>2</experiments>
</comment>
<comment type="interaction">
    <interactant intactId="EBI-347552">
        <id>P46379</id>
    </interactant>
    <interactant intactId="EBI-14989262">
        <id>O14931</id>
        <label>NCR3</label>
    </interactant>
    <organismsDiffer>false</organismsDiffer>
    <experiments>6</experiments>
</comment>
<comment type="interaction">
    <interactant intactId="EBI-347552">
        <id>P46379</id>
    </interactant>
    <interactant intactId="EBI-357322">
        <id>Q9BV68</id>
        <label>RNF126</label>
    </interactant>
    <organismsDiffer>false</organismsDiffer>
    <experiments>8</experiments>
</comment>
<comment type="interaction">
    <interactant intactId="EBI-347552">
        <id>P46379</id>
    </interactant>
    <interactant intactId="EBI-347996">
        <id>O43765</id>
        <label>SGTA</label>
    </interactant>
    <organismsDiffer>false</organismsDiffer>
    <experiments>6</experiments>
</comment>
<comment type="interaction">
    <interactant intactId="EBI-347552">
        <id>P46379</id>
    </interactant>
    <interactant intactId="EBI-717422">
        <id>Q12800</id>
        <label>TFCP2</label>
    </interactant>
    <organismsDiffer>false</organismsDiffer>
    <experiments>3</experiments>
</comment>
<comment type="interaction">
    <interactant intactId="EBI-347552">
        <id>P46379</id>
    </interactant>
    <interactant intactId="EBI-25489121">
        <id>Q19QW2</id>
        <label>sars8a</label>
    </interactant>
    <organismsDiffer>true</organismsDiffer>
    <experiments>2</experiments>
</comment>
<comment type="interaction">
    <interactant intactId="EBI-9640181">
        <id>P46379-1</id>
    </interactant>
    <interactant intactId="EBI-15013584">
        <id>O14931-1</id>
        <label>NCR3</label>
    </interactant>
    <organismsDiffer>false</organismsDiffer>
    <experiments>5</experiments>
</comment>
<comment type="interaction">
    <interactant intactId="EBI-10988864">
        <id>P46379-2</id>
    </interactant>
    <interactant intactId="EBI-11022349">
        <id>Q99996-3</id>
        <label>AKAP9</label>
    </interactant>
    <organismsDiffer>false</organismsDiffer>
    <experiments>3</experiments>
</comment>
<comment type="interaction">
    <interactant intactId="EBI-10988864">
        <id>P46379-2</id>
    </interactant>
    <interactant intactId="EBI-25928834">
        <id>A0A0S2Z5Q7</id>
        <label>ALS2</label>
    </interactant>
    <organismsDiffer>false</organismsDiffer>
    <experiments>3</experiments>
</comment>
<comment type="interaction">
    <interactant intactId="EBI-10988864">
        <id>P46379-2</id>
    </interactant>
    <interactant intactId="EBI-11893530">
        <id>Q9NP70</id>
        <label>AMBN</label>
    </interactant>
    <organismsDiffer>false</organismsDiffer>
    <experiments>3</experiments>
</comment>
<comment type="interaction">
    <interactant intactId="EBI-10988864">
        <id>P46379-2</id>
    </interactant>
    <interactant intactId="EBI-11892684">
        <id>Q6UX39</id>
        <label>AMTN</label>
    </interactant>
    <organismsDiffer>false</organismsDiffer>
    <experiments>3</experiments>
</comment>
<comment type="interaction">
    <interactant intactId="EBI-10988864">
        <id>P46379-2</id>
    </interactant>
    <interactant intactId="EBI-2556915">
        <id>P13928</id>
        <label>ANXA8</label>
    </interactant>
    <organismsDiffer>false</organismsDiffer>
    <experiments>3</experiments>
</comment>
<comment type="interaction">
    <interactant intactId="EBI-10988864">
        <id>P46379-2</id>
    </interactant>
    <interactant intactId="EBI-1044383">
        <id>O00203</id>
        <label>AP3B1</label>
    </interactant>
    <organismsDiffer>false</organismsDiffer>
    <experiments>3</experiments>
</comment>
<comment type="interaction">
    <interactant intactId="EBI-10988864">
        <id>P46379-2</id>
    </interactant>
    <interactant intactId="EBI-12059807">
        <id>Q7Z5R6-2</id>
        <label>APBB1IP</label>
    </interactant>
    <organismsDiffer>false</organismsDiffer>
    <experiments>3</experiments>
</comment>
<comment type="interaction">
    <interactant intactId="EBI-10988864">
        <id>P46379-2</id>
    </interactant>
    <interactant intactId="EBI-77613">
        <id>P05067</id>
        <label>APP</label>
    </interactant>
    <organismsDiffer>false</organismsDiffer>
    <experiments>5</experiments>
</comment>
<comment type="interaction">
    <interactant intactId="EBI-10988864">
        <id>P46379-2</id>
    </interactant>
    <interactant intactId="EBI-19124986">
        <id>O94778</id>
        <label>AQP8</label>
    </interactant>
    <organismsDiffer>false</organismsDiffer>
    <experiments>3</experiments>
</comment>
<comment type="interaction">
    <interactant intactId="EBI-10988864">
        <id>P46379-2</id>
    </interactant>
    <interactant intactId="EBI-22012297">
        <id>Q52LW3-2</id>
        <label>ARHGAP29</label>
    </interactant>
    <organismsDiffer>false</organismsDiffer>
    <experiments>3</experiments>
</comment>
<comment type="interaction">
    <interactant intactId="EBI-10988864">
        <id>P46379-2</id>
    </interactant>
    <interactant intactId="EBI-3449344">
        <id>Q9Y2Y0</id>
        <label>ARL2BP</label>
    </interactant>
    <organismsDiffer>false</organismsDiffer>
    <experiments>3</experiments>
</comment>
<comment type="interaction">
    <interactant intactId="EBI-10988864">
        <id>P46379-2</id>
    </interactant>
    <interactant intactId="EBI-14199987">
        <id>Q9Y575-3</id>
        <label>ASB3</label>
    </interactant>
    <organismsDiffer>false</organismsDiffer>
    <experiments>3</experiments>
</comment>
<comment type="interaction">
    <interactant intactId="EBI-10988864">
        <id>P46379-2</id>
    </interactant>
    <interactant intactId="EBI-25843552">
        <id>Q96DX5-3</id>
        <label>ASB9</label>
    </interactant>
    <organismsDiffer>false</organismsDiffer>
    <experiments>3</experiments>
</comment>
<comment type="interaction">
    <interactant intactId="EBI-10988864">
        <id>P46379-2</id>
    </interactant>
    <interactant intactId="EBI-9089489">
        <id>Q96FT7-4</id>
        <label>ASIC4</label>
    </interactant>
    <organismsDiffer>false</organismsDiffer>
    <experiments>3</experiments>
</comment>
<comment type="interaction">
    <interactant intactId="EBI-10988864">
        <id>P46379-2</id>
    </interactant>
    <interactant intactId="EBI-2891281">
        <id>P15313</id>
        <label>ATP6V1B1</label>
    </interactant>
    <organismsDiffer>false</organismsDiffer>
    <experiments>3</experiments>
</comment>
<comment type="interaction">
    <interactant intactId="EBI-10988864">
        <id>P46379-2</id>
    </interactant>
    <interactant intactId="EBI-25891409">
        <id>Q99700-5</id>
        <label>ATXN2</label>
    </interactant>
    <organismsDiffer>false</organismsDiffer>
    <experiments>3</experiments>
</comment>
<comment type="interaction">
    <interactant intactId="EBI-10988864">
        <id>P46379-2</id>
    </interactant>
    <interactant intactId="EBI-10988864">
        <id>P46379-2</id>
        <label>BAG6</label>
    </interactant>
    <organismsDiffer>false</organismsDiffer>
    <experiments>4</experiments>
</comment>
<comment type="interaction">
    <interactant intactId="EBI-10988864">
        <id>P46379-2</id>
    </interactant>
    <interactant intactId="EBI-742750">
        <id>Q8TBE0</id>
        <label>BAHD1</label>
    </interactant>
    <organismsDiffer>false</organismsDiffer>
    <experiments>3</experiments>
</comment>
<comment type="interaction">
    <interactant intactId="EBI-10988864">
        <id>P46379-2</id>
    </interactant>
    <interactant intactId="EBI-7936069">
        <id>P06276</id>
        <label>BCHE</label>
    </interactant>
    <organismsDiffer>false</organismsDiffer>
    <experiments>3</experiments>
</comment>
<comment type="interaction">
    <interactant intactId="EBI-10988864">
        <id>P46379-2</id>
    </interactant>
    <interactant intactId="EBI-949378">
        <id>Q14457</id>
        <label>BECN1</label>
    </interactant>
    <organismsDiffer>false</organismsDiffer>
    <experiments>3</experiments>
</comment>
<comment type="interaction">
    <interactant intactId="EBI-10988864">
        <id>P46379-2</id>
    </interactant>
    <interactant intactId="EBI-2837444">
        <id>Q8WUW1</id>
        <label>BRK1</label>
    </interactant>
    <organismsDiffer>false</organismsDiffer>
    <experiments>3</experiments>
</comment>
<comment type="interaction">
    <interactant intactId="EBI-10988864">
        <id>P46379-2</id>
    </interactant>
    <interactant intactId="EBI-10181422">
        <id>A0A1B0GWI1</id>
        <label>CCDC196</label>
    </interactant>
    <organismsDiffer>false</organismsDiffer>
    <experiments>3</experiments>
</comment>
<comment type="interaction">
    <interactant intactId="EBI-10988864">
        <id>P46379-2</id>
    </interactant>
    <interactant intactId="EBI-356507">
        <id>P50990</id>
        <label>CCT8</label>
    </interactant>
    <organismsDiffer>false</organismsDiffer>
    <experiments>3</experiments>
</comment>
<comment type="interaction">
    <interactant intactId="EBI-10988864">
        <id>P46379-2</id>
    </interactant>
    <interactant intactId="EBI-9680942">
        <id>Q9HCU0</id>
        <label>CD248</label>
    </interactant>
    <organismsDiffer>false</organismsDiffer>
    <experiments>3</experiments>
</comment>
<comment type="interaction">
    <interactant intactId="EBI-10988864">
        <id>P46379-2</id>
    </interactant>
    <interactant intactId="EBI-396137">
        <id>Q9UJX2</id>
        <label>CDC23</label>
    </interactant>
    <organismsDiffer>false</organismsDiffer>
    <experiments>3</experiments>
</comment>
<comment type="interaction">
    <interactant intactId="EBI-10988864">
        <id>P46379-2</id>
    </interactant>
    <interactant intactId="EBI-1210604">
        <id>Q7Z7K6</id>
        <label>CENPV</label>
    </interactant>
    <organismsDiffer>false</organismsDiffer>
    <experiments>3</experiments>
</comment>
<comment type="interaction">
    <interactant intactId="EBI-10988864">
        <id>P46379-2</id>
    </interactant>
    <interactant intactId="EBI-25836090">
        <id>Q6PJW8-3</id>
        <label>CNST</label>
    </interactant>
    <organismsDiffer>false</organismsDiffer>
    <experiments>3</experiments>
</comment>
<comment type="interaction">
    <interactant intactId="EBI-10988864">
        <id>P46379-2</id>
    </interactant>
    <interactant intactId="EBI-720875">
        <id>Q96MW5</id>
        <label>COG8</label>
    </interactant>
    <organismsDiffer>false</organismsDiffer>
    <experiments>3</experiments>
</comment>
<comment type="interaction">
    <interactant intactId="EBI-10988864">
        <id>P46379-2</id>
    </interactant>
    <interactant intactId="EBI-12884642">
        <id>Q03060-25</id>
        <label>CREM</label>
    </interactant>
    <organismsDiffer>false</organismsDiffer>
    <experiments>3</experiments>
</comment>
<comment type="interaction">
    <interactant intactId="EBI-10988864">
        <id>P46379-2</id>
    </interactant>
    <interactant intactId="EBI-2872414">
        <id>Q8IUI8</id>
        <label>CRLF3</label>
    </interactant>
    <organismsDiffer>false</organismsDiffer>
    <experiments>3</experiments>
</comment>
<comment type="interaction">
    <interactant intactId="EBI-10988864">
        <id>P46379-2</id>
    </interactant>
    <interactant intactId="EBI-750444">
        <id>P53672</id>
        <label>CRYBA2</label>
    </interactant>
    <organismsDiffer>false</organismsDiffer>
    <experiments>3</experiments>
</comment>
<comment type="interaction">
    <interactant intactId="EBI-10988864">
        <id>P46379-2</id>
    </interactant>
    <interactant intactId="EBI-1188472">
        <id>P78358</id>
        <label>CTAG1B</label>
    </interactant>
    <organismsDiffer>false</organismsDiffer>
    <experiments>3</experiments>
</comment>
<comment type="interaction">
    <interactant intactId="EBI-10988864">
        <id>P46379-2</id>
    </interactant>
    <interactant intactId="EBI-1055930">
        <id>Q9NUQ9</id>
        <label>CYRIB</label>
    </interactant>
    <organismsDiffer>false</organismsDiffer>
    <experiments>3</experiments>
</comment>
<comment type="interaction">
    <interactant intactId="EBI-10988864">
        <id>P46379-2</id>
    </interactant>
    <interactant intactId="EBI-3867333">
        <id>A8MQ03</id>
        <label>CYSRT1</label>
    </interactant>
    <organismsDiffer>false</organismsDiffer>
    <experiments>3</experiments>
</comment>
<comment type="interaction">
    <interactant intactId="EBI-10988864">
        <id>P46379-2</id>
    </interactant>
    <interactant intactId="EBI-751783">
        <id>Q9UJU6</id>
        <label>DBNL</label>
    </interactant>
    <organismsDiffer>false</organismsDiffer>
    <experiments>3</experiments>
</comment>
<comment type="interaction">
    <interactant intactId="EBI-10988864">
        <id>P46379-2</id>
    </interactant>
    <interactant intactId="EBI-25840379">
        <id>Q14203-5</id>
        <label>DCTN1</label>
    </interactant>
    <organismsDiffer>false</organismsDiffer>
    <experiments>3</experiments>
</comment>
<comment type="interaction">
    <interactant intactId="EBI-10988864">
        <id>P46379-2</id>
    </interactant>
    <interactant intactId="EBI-954409">
        <id>Q9UBP4</id>
        <label>DKK3</label>
    </interactant>
    <organismsDiffer>false</organismsDiffer>
    <experiments>3</experiments>
</comment>
<comment type="interaction">
    <interactant intactId="EBI-10988864">
        <id>P46379-2</id>
    </interactant>
    <interactant intactId="EBI-7943171">
        <id>Q6E0U4</id>
        <label>DMKN</label>
    </interactant>
    <organismsDiffer>false</organismsDiffer>
    <experiments>3</experiments>
</comment>
<comment type="interaction">
    <interactant intactId="EBI-10988864">
        <id>P46379-2</id>
    </interactant>
    <interactant intactId="EBI-10976677">
        <id>G5E9A7</id>
        <label>DMWD</label>
    </interactant>
    <organismsDiffer>false</organismsDiffer>
    <experiments>3</experiments>
</comment>
<comment type="interaction">
    <interactant intactId="EBI-10988864">
        <id>P46379-2</id>
    </interactant>
    <interactant intactId="EBI-21529239">
        <id>Q86TI2-2</id>
        <label>DPP9</label>
    </interactant>
    <organismsDiffer>false</organismsDiffer>
    <experiments>3</experiments>
</comment>
<comment type="interaction">
    <interactant intactId="EBI-10988864">
        <id>P46379-2</id>
    </interactant>
    <interactant intactId="EBI-12275416">
        <id>Q14117</id>
        <label>DPYS</label>
    </interactant>
    <organismsDiffer>false</organismsDiffer>
    <experiments>3</experiments>
</comment>
<comment type="interaction">
    <interactant intactId="EBI-10988864">
        <id>P46379-2</id>
    </interactant>
    <interactant intactId="EBI-750300">
        <id>Q01658</id>
        <label>DR1</label>
    </interactant>
    <organismsDiffer>false</organismsDiffer>
    <experiments>3</experiments>
</comment>
<comment type="interaction">
    <interactant intactId="EBI-10988864">
        <id>P46379-2</id>
    </interactant>
    <interactant intactId="EBI-1001144">
        <id>Q9H410</id>
        <label>DSN1</label>
    </interactant>
    <organismsDiffer>false</organismsDiffer>
    <experiments>3</experiments>
</comment>
<comment type="interaction">
    <interactant intactId="EBI-10988864">
        <id>P46379-2</id>
    </interactant>
    <interactant intactId="EBI-372173">
        <id>O77932</id>
        <label>DXO</label>
    </interactant>
    <organismsDiffer>false</organismsDiffer>
    <experiments>3</experiments>
</comment>
<comment type="interaction">
    <interactant intactId="EBI-10988864">
        <id>P46379-2</id>
    </interactant>
    <interactant intactId="EBI-7779316">
        <id>A0AVK6</id>
        <label>E2F8</label>
    </interactant>
    <organismsDiffer>false</organismsDiffer>
    <experiments>3</experiments>
</comment>
<comment type="interaction">
    <interactant intactId="EBI-10988864">
        <id>P46379-2</id>
    </interactant>
    <interactant intactId="EBI-743414">
        <id>O95967</id>
        <label>EFEMP2</label>
    </interactant>
    <organismsDiffer>false</organismsDiffer>
    <experiments>3</experiments>
</comment>
<comment type="interaction">
    <interactant intactId="EBI-10988864">
        <id>P46379-2</id>
    </interactant>
    <interactant intactId="EBI-711990">
        <id>O00303</id>
        <label>EIF3F</label>
    </interactant>
    <organismsDiffer>false</organismsDiffer>
    <experiments>3</experiments>
</comment>
<comment type="interaction">
    <interactant intactId="EBI-10988864">
        <id>P46379-2</id>
    </interactant>
    <interactant intactId="EBI-10213520">
        <id>Q6NXG1</id>
        <label>ESRP1</label>
    </interactant>
    <organismsDiffer>false</organismsDiffer>
    <experiments>3</experiments>
</comment>
<comment type="interaction">
    <interactant intactId="EBI-10988864">
        <id>P46379-2</id>
    </interactant>
    <interactant intactId="EBI-21567429">
        <id>Q6NXG1-3</id>
        <label>ESRP1</label>
    </interactant>
    <organismsDiffer>false</organismsDiffer>
    <experiments>3</experiments>
</comment>
<comment type="interaction">
    <interactant intactId="EBI-10988864">
        <id>P46379-2</id>
    </interactant>
    <interactant intactId="EBI-3893327">
        <id>Q6P1L5</id>
        <label>FAM117B</label>
    </interactant>
    <organismsDiffer>false</organismsDiffer>
    <experiments>3</experiments>
</comment>
<comment type="interaction">
    <interactant intactId="EBI-10988864">
        <id>P46379-2</id>
    </interactant>
    <interactant intactId="EBI-25835236">
        <id>Q49AJ0-4</id>
        <label>FAM135B</label>
    </interactant>
    <organismsDiffer>false</organismsDiffer>
    <experiments>3</experiments>
</comment>
<comment type="interaction">
    <interactant intactId="EBI-10988864">
        <id>P46379-2</id>
    </interactant>
    <interactant intactId="EBI-1045879">
        <id>Q8WVX9</id>
        <label>FAR1</label>
    </interactant>
    <organismsDiffer>false</organismsDiffer>
    <experiments>3</experiments>
</comment>
<comment type="interaction">
    <interactant intactId="EBI-10988864">
        <id>P46379-2</id>
    </interactant>
    <interactant intactId="EBI-3909329">
        <id>Q9NSA1</id>
        <label>FGF21</label>
    </interactant>
    <organismsDiffer>false</organismsDiffer>
    <experiments>3</experiments>
</comment>
<comment type="interaction">
    <interactant intactId="EBI-10988864">
        <id>P46379-2</id>
    </interactant>
    <interactant intactId="EBI-400434">
        <id>P35637</id>
        <label>FUS</label>
    </interactant>
    <organismsDiffer>false</organismsDiffer>
    <experiments>3</experiments>
</comment>
<comment type="interaction">
    <interactant intactId="EBI-10988864">
        <id>P46379-2</id>
    </interactant>
    <interactant intactId="EBI-10691738">
        <id>P06241-3</id>
        <label>FYN</label>
    </interactant>
    <organismsDiffer>false</organismsDiffer>
    <experiments>3</experiments>
</comment>
<comment type="interaction">
    <interactant intactId="EBI-10988864">
        <id>P46379-2</id>
    </interactant>
    <interactant intactId="EBI-9090198">
        <id>P15976-2</id>
        <label>GATA1</label>
    </interactant>
    <organismsDiffer>false</organismsDiffer>
    <experiments>3</experiments>
</comment>
<comment type="interaction">
    <interactant intactId="EBI-10988864">
        <id>P46379-2</id>
    </interactant>
    <interactant intactId="EBI-711823">
        <id>Q7L5D6</id>
        <label>GET4</label>
    </interactant>
    <organismsDiffer>false</organismsDiffer>
    <experiments>4</experiments>
</comment>
<comment type="interaction">
    <interactant intactId="EBI-10988864">
        <id>P46379-2</id>
    </interactant>
    <interactant intactId="EBI-2857315">
        <id>Q9BRX5</id>
        <label>GINS3</label>
    </interactant>
    <organismsDiffer>false</organismsDiffer>
    <experiments>3</experiments>
</comment>
<comment type="interaction">
    <interactant intactId="EBI-10988864">
        <id>P46379-2</id>
    </interactant>
    <interactant intactId="EBI-750953">
        <id>Q96IJ6</id>
        <label>GMPPA</label>
    </interactant>
    <organismsDiffer>false</organismsDiffer>
    <experiments>3</experiments>
</comment>
<comment type="interaction">
    <interactant intactId="EBI-10988864">
        <id>P46379-2</id>
    </interactant>
    <interactant intactId="EBI-5916454">
        <id>A6NEM1</id>
        <label>GOLGA6L9</label>
    </interactant>
    <organismsDiffer>false</organismsDiffer>
    <experiments>3</experiments>
</comment>
<comment type="interaction">
    <interactant intactId="EBI-10988864">
        <id>P46379-2</id>
    </interactant>
    <interactant intactId="EBI-747754">
        <id>P28799</id>
        <label>GRN</label>
    </interactant>
    <organismsDiffer>false</organismsDiffer>
    <experiments>3</experiments>
</comment>
<comment type="interaction">
    <interactant intactId="EBI-10988864">
        <id>P46379-2</id>
    </interactant>
    <interactant intactId="EBI-1054873">
        <id>Q9Y5Q9</id>
        <label>GTF3C3</label>
    </interactant>
    <organismsDiffer>false</organismsDiffer>
    <experiments>3</experiments>
</comment>
<comment type="interaction">
    <interactant intactId="EBI-10988864">
        <id>P46379-2</id>
    </interactant>
    <interactant intactId="EBI-725259">
        <id>Q93077</id>
        <label>H2AC6</label>
    </interactant>
    <organismsDiffer>false</organismsDiffer>
    <experiments>3</experiments>
</comment>
<comment type="interaction">
    <interactant intactId="EBI-10988864">
        <id>P46379-2</id>
    </interactant>
    <interactant intactId="EBI-2868501">
        <id>Q6NXT2</id>
        <label>H3-5</label>
    </interactant>
    <organismsDiffer>false</organismsDiffer>
    <experiments>3</experiments>
</comment>
<comment type="interaction">
    <interactant intactId="EBI-10988864">
        <id>P46379-2</id>
    </interactant>
    <interactant intactId="EBI-2514791">
        <id>Q96CS2</id>
        <label>HAUS1</label>
    </interactant>
    <organismsDiffer>false</organismsDiffer>
    <experiments>3</experiments>
</comment>
<comment type="interaction">
    <interactant intactId="EBI-10988864">
        <id>P46379-2</id>
    </interactant>
    <interactant intactId="EBI-352682">
        <id>P04792</id>
        <label>HSPB1</label>
    </interactant>
    <organismsDiffer>false</organismsDiffer>
    <experiments>3</experiments>
</comment>
<comment type="interaction">
    <interactant intactId="EBI-10988864">
        <id>P46379-2</id>
    </interactant>
    <interactant intactId="EBI-12823003">
        <id>P80217-2</id>
        <label>IFI35</label>
    </interactant>
    <organismsDiffer>false</organismsDiffer>
    <experiments>3</experiments>
</comment>
<comment type="interaction">
    <interactant intactId="EBI-10988864">
        <id>P46379-2</id>
    </interactant>
    <interactant intactId="EBI-13646303">
        <id>P08833</id>
        <label>IGFBP1</label>
    </interactant>
    <organismsDiffer>false</organismsDiffer>
    <experiments>3</experiments>
</comment>
<comment type="interaction">
    <interactant intactId="EBI-10988864">
        <id>P46379-2</id>
    </interactant>
    <interactant intactId="EBI-2831948">
        <id>P22692</id>
        <label>IGFBP4</label>
    </interactant>
    <organismsDiffer>false</organismsDiffer>
    <experiments>3</experiments>
</comment>
<comment type="interaction">
    <interactant intactId="EBI-10988864">
        <id>P46379-2</id>
    </interactant>
    <interactant intactId="EBI-17178971">
        <id>Q14005-2</id>
        <label>IL16</label>
    </interactant>
    <organismsDiffer>false</organismsDiffer>
    <experiments>3</experiments>
</comment>
<comment type="interaction">
    <interactant intactId="EBI-10988864">
        <id>P46379-2</id>
    </interactant>
    <interactant intactId="EBI-712105">
        <id>Q13352</id>
        <label>ITGB3BP</label>
    </interactant>
    <organismsDiffer>false</organismsDiffer>
    <experiments>3</experiments>
</comment>
<comment type="interaction">
    <interactant intactId="EBI-10988864">
        <id>P46379-2</id>
    </interactant>
    <interactant intactId="EBI-25904181">
        <id>Q96I82</id>
        <label>KAZALD1</label>
    </interactant>
    <organismsDiffer>false</organismsDiffer>
    <experiments>3</experiments>
</comment>
<comment type="interaction">
    <interactant intactId="EBI-10988864">
        <id>P46379-2</id>
    </interactant>
    <interactant intactId="EBI-25844799">
        <id>A1A512</id>
        <label>KIAA0355</label>
    </interactant>
    <organismsDiffer>false</organismsDiffer>
    <experiments>3</experiments>
</comment>
<comment type="interaction">
    <interactant intactId="EBI-10988864">
        <id>P46379-2</id>
    </interactant>
    <interactant intactId="EBI-10975473">
        <id>O60333-2</id>
        <label>KIF1B</label>
    </interactant>
    <organismsDiffer>false</organismsDiffer>
    <experiments>3</experiments>
</comment>
<comment type="interaction">
    <interactant intactId="EBI-10988864">
        <id>P46379-2</id>
    </interactant>
    <interactant intactId="EBI-2796400">
        <id>Q9UIH9</id>
        <label>KLF15</label>
    </interactant>
    <organismsDiffer>false</organismsDiffer>
    <experiments>3</experiments>
</comment>
<comment type="interaction">
    <interactant intactId="EBI-10988864">
        <id>P46379-2</id>
    </interactant>
    <interactant intactId="EBI-8472267">
        <id>P57682</id>
        <label>KLF3</label>
    </interactant>
    <organismsDiffer>false</organismsDiffer>
    <experiments>3</experiments>
</comment>
<comment type="interaction">
    <interactant intactId="EBI-10988864">
        <id>P46379-2</id>
    </interactant>
    <interactant intactId="EBI-2696013">
        <id>Q13887</id>
        <label>KLF5</label>
    </interactant>
    <organismsDiffer>false</organismsDiffer>
    <experiments>3</experiments>
</comment>
<comment type="interaction">
    <interactant intactId="EBI-10988864">
        <id>P46379-2</id>
    </interactant>
    <interactant intactId="EBI-740929">
        <id>Q53G59</id>
        <label>KLHL12</label>
    </interactant>
    <organismsDiffer>false</organismsDiffer>
    <experiments>3</experiments>
</comment>
<comment type="interaction">
    <interactant intactId="EBI-10988864">
        <id>P46379-2</id>
    </interactant>
    <interactant intactId="EBI-714379">
        <id>Q9Y2M5</id>
        <label>KLHL20</label>
    </interactant>
    <organismsDiffer>false</organismsDiffer>
    <experiments>3</experiments>
</comment>
<comment type="interaction">
    <interactant intactId="EBI-10988864">
        <id>P46379-2</id>
    </interactant>
    <interactant intactId="EBI-8473062">
        <id>Q8N1A0</id>
        <label>KRT222</label>
    </interactant>
    <organismsDiffer>false</organismsDiffer>
    <experiments>3</experiments>
</comment>
<comment type="interaction">
    <interactant intactId="EBI-10988864">
        <id>P46379-2</id>
    </interactant>
    <interactant intactId="EBI-723416">
        <id>Q15012</id>
        <label>LAPTM4A</label>
    </interactant>
    <organismsDiffer>false</organismsDiffer>
    <experiments>3</experiments>
</comment>
<comment type="interaction">
    <interactant intactId="EBI-10988864">
        <id>P46379-2</id>
    </interactant>
    <interactant intactId="EBI-1052558">
        <id>Q92615</id>
        <label>LARP4B</label>
    </interactant>
    <organismsDiffer>false</organismsDiffer>
    <experiments>3</experiments>
</comment>
<comment type="interaction">
    <interactant intactId="EBI-10988864">
        <id>P46379-2</id>
    </interactant>
    <interactant intactId="EBI-9088829">
        <id>Q6DKI2</id>
        <label>LGALS9C</label>
    </interactant>
    <organismsDiffer>false</organismsDiffer>
    <experiments>3</experiments>
</comment>
<comment type="interaction">
    <interactant intactId="EBI-10988864">
        <id>P46379-2</id>
    </interactant>
    <interactant intactId="EBI-351935">
        <id>P02545</id>
        <label>LMNA</label>
    </interactant>
    <organismsDiffer>false</organismsDiffer>
    <experiments>3</experiments>
</comment>
<comment type="interaction">
    <interactant intactId="EBI-10988864">
        <id>P46379-2</id>
    </interactant>
    <interactant intactId="EBI-2350424">
        <id>Q9BV99</id>
        <label>LRRC61</label>
    </interactant>
    <organismsDiffer>false</organismsDiffer>
    <experiments>3</experiments>
</comment>
<comment type="interaction">
    <interactant intactId="EBI-10988864">
        <id>P46379-2</id>
    </interactant>
    <interactant intactId="EBI-12056869">
        <id>Q9UDY8-2</id>
        <label>MALT1</label>
    </interactant>
    <organismsDiffer>false</organismsDiffer>
    <experiments>3</experiments>
</comment>
<comment type="interaction">
    <interactant intactId="EBI-10988864">
        <id>P46379-2</id>
    </interactant>
    <interactant intactId="EBI-6165891">
        <id>Q14696</id>
        <label>MESD</label>
    </interactant>
    <organismsDiffer>false</organismsDiffer>
    <experiments>3</experiments>
</comment>
<comment type="interaction">
    <interactant intactId="EBI-10988864">
        <id>P46379-2</id>
    </interactant>
    <interactant intactId="EBI-8487781">
        <id>Q8N6F8</id>
        <label>METTL27</label>
    </interactant>
    <organismsDiffer>false</organismsDiffer>
    <experiments>3</experiments>
</comment>
<comment type="interaction">
    <interactant intactId="EBI-10988864">
        <id>P46379-2</id>
    </interactant>
    <interactant intactId="EBI-14141314">
        <id>Q9HBH9-2</id>
        <label>MKNK2</label>
    </interactant>
    <organismsDiffer>false</organismsDiffer>
    <experiments>3</experiments>
</comment>
<comment type="interaction">
    <interactant intactId="EBI-10988864">
        <id>P46379-2</id>
    </interactant>
    <interactant intactId="EBI-747381">
        <id>Q9BV20</id>
        <label>MRI1</label>
    </interactant>
    <organismsDiffer>false</organismsDiffer>
    <experiments>3</experiments>
</comment>
<comment type="interaction">
    <interactant intactId="EBI-10988864">
        <id>P46379-2</id>
    </interactant>
    <interactant intactId="EBI-15013584">
        <id>O14931-1</id>
        <label>NCR3</label>
    </interactant>
    <organismsDiffer>false</organismsDiffer>
    <experiments>4</experiments>
</comment>
<comment type="interaction">
    <interactant intactId="EBI-10988864">
        <id>P46379-2</id>
    </interactant>
    <interactant intactId="EBI-1058491">
        <id>Q96FW1</id>
        <label>OTUB1</label>
    </interactant>
    <organismsDiffer>false</organismsDiffer>
    <experiments>3</experiments>
</comment>
<comment type="interaction">
    <interactant intactId="EBI-10988864">
        <id>P46379-2</id>
    </interactant>
    <interactant intactId="EBI-25830200">
        <id>Q6GQQ9-2</id>
        <label>OTUD7B</label>
    </interactant>
    <organismsDiffer>false</organismsDiffer>
    <experiments>3</experiments>
</comment>
<comment type="interaction">
    <interactant intactId="EBI-10988864">
        <id>P46379-2</id>
    </interactant>
    <interactant intactId="EBI-22012354">
        <id>Q9BR81</id>
        <label>PCDHGC3</label>
    </interactant>
    <organismsDiffer>false</organismsDiffer>
    <experiments>3</experiments>
</comment>
<comment type="interaction">
    <interactant intactId="EBI-10988864">
        <id>P46379-2</id>
    </interactant>
    <interactant intactId="EBI-2557276">
        <id>O15534</id>
        <label>PER1</label>
    </interactant>
    <organismsDiffer>false</organismsDiffer>
    <experiments>3</experiments>
</comment>
<comment type="interaction">
    <interactant intactId="EBI-10988864">
        <id>P46379-2</id>
    </interactant>
    <interactant intactId="EBI-713832">
        <id>Q6P1K2</id>
        <label>PMF1</label>
    </interactant>
    <organismsDiffer>false</organismsDiffer>
    <experiments>3</experiments>
</comment>
<comment type="interaction">
    <interactant intactId="EBI-10988864">
        <id>P46379-2</id>
    </interactant>
    <interactant intactId="EBI-25835994">
        <id>Q6ZMI0-5</id>
        <label>PPP1R21</label>
    </interactant>
    <organismsDiffer>false</organismsDiffer>
    <experiments>3</experiments>
</comment>
<comment type="interaction">
    <interactant intactId="EBI-10988864">
        <id>P46379-2</id>
    </interactant>
    <interactant intactId="EBI-2805516">
        <id>P31321</id>
        <label>PRKAR1B</label>
    </interactant>
    <organismsDiffer>false</organismsDiffer>
    <experiments>3</experiments>
</comment>
<comment type="interaction">
    <interactant intactId="EBI-10988864">
        <id>P46379-2</id>
    </interactant>
    <interactant intactId="EBI-21251460">
        <id>O60260-5</id>
        <label>PRKN</label>
    </interactant>
    <organismsDiffer>false</organismsDiffer>
    <experiments>3</experiments>
</comment>
<comment type="interaction">
    <interactant intactId="EBI-10988864">
        <id>P46379-2</id>
    </interactant>
    <interactant intactId="EBI-743880">
        <id>Q8WUY3</id>
        <label>PRUNE2</label>
    </interactant>
    <organismsDiffer>false</organismsDiffer>
    <experiments>3</experiments>
</comment>
<comment type="interaction">
    <interactant intactId="EBI-10988864">
        <id>P46379-2</id>
    </interactant>
    <interactant intactId="EBI-11984839">
        <id>Q96QF0-7</id>
        <label>RAB3IP</label>
    </interactant>
    <organismsDiffer>false</organismsDiffer>
    <experiments>3</experiments>
</comment>
<comment type="interaction">
    <interactant intactId="EBI-10988864">
        <id>P46379-2</id>
    </interactant>
    <interactant intactId="EBI-948278">
        <id>Q15293</id>
        <label>RCN1</label>
    </interactant>
    <organismsDiffer>false</organismsDiffer>
    <experiments>3</experiments>
</comment>
<comment type="interaction">
    <interactant intactId="EBI-10988864">
        <id>P46379-2</id>
    </interactant>
    <interactant intactId="EBI-25834767">
        <id>P47804-3</id>
        <label>RGR</label>
    </interactant>
    <organismsDiffer>false</organismsDiffer>
    <experiments>3</experiments>
</comment>
<comment type="interaction">
    <interactant intactId="EBI-10988864">
        <id>P46379-2</id>
    </interactant>
    <interactant intactId="EBI-396669">
        <id>Q9Y3C5</id>
        <label>RNF11</label>
    </interactant>
    <organismsDiffer>false</organismsDiffer>
    <experiments>3</experiments>
</comment>
<comment type="interaction">
    <interactant intactId="EBI-10988864">
        <id>P46379-2</id>
    </interactant>
    <interactant intactId="EBI-357322">
        <id>Q9BV68</id>
        <label>RNF126</label>
    </interactant>
    <organismsDiffer>false</organismsDiffer>
    <experiments>4</experiments>
</comment>
<comment type="interaction">
    <interactant intactId="EBI-10988864">
        <id>P46379-2</id>
    </interactant>
    <interactant intactId="EBI-1046616">
        <id>P51812</id>
        <label>RPS6KA3</label>
    </interactant>
    <organismsDiffer>false</organismsDiffer>
    <experiments>3</experiments>
</comment>
<comment type="interaction">
    <interactant intactId="EBI-10988864">
        <id>P46379-2</id>
    </interactant>
    <interactant intactId="EBI-25837959">
        <id>Q9BY12-3</id>
        <label>SCAPER</label>
    </interactant>
    <organismsDiffer>false</organismsDiffer>
    <experiments>3</experiments>
</comment>
<comment type="interaction">
    <interactant intactId="EBI-10988864">
        <id>P46379-2</id>
    </interactant>
    <interactant intactId="EBI-347996">
        <id>O43765</id>
        <label>SGTA</label>
    </interactant>
    <organismsDiffer>false</organismsDiffer>
    <experiments>3</experiments>
</comment>
<comment type="interaction">
    <interactant intactId="EBI-10988864">
        <id>P46379-2</id>
    </interactant>
    <interactant intactId="EBI-358489">
        <id>Q96GM5</id>
        <label>SMARCD1</label>
    </interactant>
    <organismsDiffer>false</organismsDiffer>
    <experiments>3</experiments>
</comment>
<comment type="interaction">
    <interactant intactId="EBI-10988864">
        <id>P46379-2</id>
    </interactant>
    <interactant intactId="EBI-985879">
        <id>P37840</id>
        <label>SNCA</label>
    </interactant>
    <organismsDiffer>false</organismsDiffer>
    <experiments>3</experiments>
</comment>
<comment type="interaction">
    <interactant intactId="EBI-10988864">
        <id>P46379-2</id>
    </interactant>
    <interactant intactId="EBI-10696971">
        <id>Q7Z6I5</id>
        <label>SPATA12</label>
    </interactant>
    <organismsDiffer>false</organismsDiffer>
    <experiments>3</experiments>
</comment>
<comment type="interaction">
    <interactant intactId="EBI-10988864">
        <id>P46379-2</id>
    </interactant>
    <interactant intactId="EBI-723648">
        <id>P10451</id>
        <label>SPP1</label>
    </interactant>
    <organismsDiffer>false</organismsDiffer>
    <experiments>3</experiments>
</comment>
<comment type="interaction">
    <interactant intactId="EBI-10988864">
        <id>P46379-2</id>
    </interactant>
    <interactant intactId="EBI-5235340">
        <id>Q7Z699</id>
        <label>SPRED1</label>
    </interactant>
    <organismsDiffer>false</organismsDiffer>
    <experiments>3</experiments>
</comment>
<comment type="interaction">
    <interactant intactId="EBI-10988864">
        <id>P46379-2</id>
    </interactant>
    <interactant intactId="EBI-372899">
        <id>Q13148</id>
        <label>TARDBP</label>
    </interactant>
    <organismsDiffer>false</organismsDiffer>
    <experiments>6</experiments>
</comment>
<comment type="interaction">
    <interactant intactId="EBI-10988864">
        <id>P46379-2</id>
    </interactant>
    <interactant intactId="EBI-11897462">
        <id>Q8N4U5</id>
        <label>TCP11L2</label>
    </interactant>
    <organismsDiffer>false</organismsDiffer>
    <experiments>3</experiments>
</comment>
<comment type="interaction">
    <interactant intactId="EBI-10988864">
        <id>P46379-2</id>
    </interactant>
    <interactant intactId="EBI-11278332">
        <id>Q6NUS6</id>
        <label>TCTN3</label>
    </interactant>
    <organismsDiffer>false</organismsDiffer>
    <experiments>3</experiments>
</comment>
<comment type="interaction">
    <interactant intactId="EBI-10988864">
        <id>P46379-2</id>
    </interactant>
    <interactant intactId="EBI-2902553">
        <id>Q9NUW8</id>
        <label>TDP1</label>
    </interactant>
    <organismsDiffer>false</organismsDiffer>
    <experiments>3</experiments>
</comment>
<comment type="interaction">
    <interactant intactId="EBI-10988864">
        <id>P46379-2</id>
    </interactant>
    <interactant intactId="EBI-2562799">
        <id>Q86WV5</id>
        <label>TEN1</label>
    </interactant>
    <organismsDiffer>false</organismsDiffer>
    <experiments>3</experiments>
</comment>
<comment type="interaction">
    <interactant intactId="EBI-10988864">
        <id>P46379-2</id>
    </interactant>
    <interactant intactId="EBI-17438286">
        <id>Q8WTV1</id>
        <label>THAP3</label>
    </interactant>
    <organismsDiffer>false</organismsDiffer>
    <experiments>3</experiments>
</comment>
<comment type="interaction">
    <interactant intactId="EBI-10988864">
        <id>P46379-2</id>
    </interactant>
    <interactant intactId="EBI-9089156">
        <id>Q8IUR5-4</id>
        <label>TMTC1</label>
    </interactant>
    <organismsDiffer>false</organismsDiffer>
    <experiments>3</experiments>
</comment>
<comment type="interaction">
    <interactant intactId="EBI-10988864">
        <id>P46379-2</id>
    </interactant>
    <interactant intactId="EBI-396540">
        <id>Q12888</id>
        <label>TP53BP1</label>
    </interactant>
    <organismsDiffer>false</organismsDiffer>
    <experiments>3</experiments>
</comment>
<comment type="interaction">
    <interactant intactId="EBI-10988864">
        <id>P46379-2</id>
    </interactant>
    <interactant intactId="EBI-11525489">
        <id>Q86WT6-2</id>
        <label>TRIM69</label>
    </interactant>
    <organismsDiffer>false</organismsDiffer>
    <experiments>3</experiments>
</comment>
<comment type="interaction">
    <interactant intactId="EBI-10988864">
        <id>P46379-2</id>
    </interactant>
    <interactant intactId="EBI-12806590">
        <id>Q86WV8</id>
        <label>TSC1</label>
    </interactant>
    <organismsDiffer>false</organismsDiffer>
    <experiments>5</experiments>
</comment>
<comment type="interaction">
    <interactant intactId="EBI-10988864">
        <id>P46379-2</id>
    </interactant>
    <interactant intactId="EBI-21353855">
        <id>Q99598</id>
        <label>TSNAX</label>
    </interactant>
    <organismsDiffer>false</organismsDiffer>
    <experiments>3</experiments>
</comment>
<comment type="interaction">
    <interactant intactId="EBI-10988864">
        <id>P46379-2</id>
    </interactant>
    <interactant intactId="EBI-10267507">
        <id>Q8N7F7</id>
        <label>UBL4B</label>
    </interactant>
    <organismsDiffer>false</organismsDiffer>
    <experiments>3</experiments>
</comment>
<comment type="interaction">
    <interactant intactId="EBI-10988864">
        <id>P46379-2</id>
    </interactant>
    <interactant intactId="EBI-741480">
        <id>Q9UMX0</id>
        <label>UBQLN1</label>
    </interactant>
    <organismsDiffer>false</organismsDiffer>
    <experiments>3</experiments>
</comment>
<comment type="interaction">
    <interactant intactId="EBI-10988864">
        <id>P46379-2</id>
    </interactant>
    <interactant intactId="EBI-947187">
        <id>Q9UHD9</id>
        <label>UBQLN2</label>
    </interactant>
    <organismsDiffer>false</organismsDiffer>
    <experiments>3</experiments>
</comment>
<comment type="interaction">
    <interactant intactId="EBI-10988864">
        <id>P46379-2</id>
    </interactant>
    <interactant intactId="EBI-354022">
        <id>P45880</id>
        <label>VDAC2</label>
    </interactant>
    <organismsDiffer>false</organismsDiffer>
    <experiments>3</experiments>
</comment>
<comment type="interaction">
    <interactant intactId="EBI-10988864">
        <id>P46379-2</id>
    </interactant>
    <interactant intactId="EBI-21789837">
        <id>Q9NZR4</id>
        <label>VSX1</label>
    </interactant>
    <organismsDiffer>false</organismsDiffer>
    <experiments>3</experiments>
</comment>
<comment type="interaction">
    <interactant intactId="EBI-10988864">
        <id>P46379-2</id>
    </interactant>
    <interactant intactId="EBI-6427899">
        <id>P58304</id>
        <label>VSX2</label>
    </interactant>
    <organismsDiffer>false</organismsDiffer>
    <experiments>3</experiments>
</comment>
<comment type="interaction">
    <interactant intactId="EBI-10988864">
        <id>P46379-2</id>
    </interactant>
    <interactant intactId="EBI-720609">
        <id>O76024</id>
        <label>WFS1</label>
    </interactant>
    <organismsDiffer>false</organismsDiffer>
    <experiments>3</experiments>
</comment>
<comment type="interaction">
    <interactant intactId="EBI-10988864">
        <id>P46379-2</id>
    </interactant>
    <interactant intactId="EBI-21659356">
        <id>Q86U90</id>
        <label>YRDC</label>
    </interactant>
    <organismsDiffer>false</organismsDiffer>
    <experiments>3</experiments>
</comment>
<comment type="interaction">
    <interactant intactId="EBI-10988864">
        <id>P46379-2</id>
    </interactant>
    <interactant intactId="EBI-12956041">
        <id>Q8IWT0-2</id>
        <label>ZBTB8OS</label>
    </interactant>
    <organismsDiffer>false</organismsDiffer>
    <experiments>3</experiments>
</comment>
<comment type="interaction">
    <interactant intactId="EBI-10988864">
        <id>P46379-2</id>
    </interactant>
    <interactant intactId="EBI-10693326">
        <id>Q9H4I2-2</id>
        <label>ZHX3</label>
    </interactant>
    <organismsDiffer>false</organismsDiffer>
    <experiments>3</experiments>
</comment>
<comment type="interaction">
    <interactant intactId="EBI-10988864">
        <id>P46379-2</id>
    </interactant>
    <interactant intactId="EBI-2462313">
        <id>Q9UL40</id>
        <label>ZNF346</label>
    </interactant>
    <organismsDiffer>false</organismsDiffer>
    <experiments>3</experiments>
</comment>
<comment type="interaction">
    <interactant intactId="EBI-10988864">
        <id>P46379-2</id>
    </interactant>
    <interactant intactId="EBI-25831733">
        <id>Q96MN9-2</id>
        <label>ZNF488</label>
    </interactant>
    <organismsDiffer>false</organismsDiffer>
    <experiments>3</experiments>
</comment>
<comment type="interaction">
    <interactant intactId="EBI-10988864">
        <id>P46379-2</id>
    </interactant>
    <interactant intactId="EBI-1538838">
        <id>Q2QGD7</id>
        <label>ZXDC</label>
    </interactant>
    <organismsDiffer>false</organismsDiffer>
    <experiments>3</experiments>
</comment>
<comment type="interaction">
    <interactant intactId="EBI-10988864">
        <id>P46379-2</id>
    </interactant>
    <interactant intactId="EBI-17234977">
        <id>A0A1U9X8X8</id>
    </interactant>
    <organismsDiffer>false</organismsDiffer>
    <experiments>3</experiments>
</comment>
<comment type="interaction">
    <interactant intactId="EBI-10988864">
        <id>P46379-2</id>
    </interactant>
    <interactant intactId="EBI-25831617">
        <id>B7Z3E8</id>
    </interactant>
    <organismsDiffer>false</organismsDiffer>
    <experiments>3</experiments>
</comment>
<comment type="interaction">
    <interactant intactId="EBI-10988864">
        <id>P46379-2</id>
    </interactant>
    <interactant intactId="EBI-25878161">
        <id>Q9P1N4</id>
    </interactant>
    <organismsDiffer>false</organismsDiffer>
    <experiments>3</experiments>
</comment>
<comment type="subcellular location">
    <subcellularLocation>
        <location evidence="7 13 15 30">Cytoplasm</location>
        <location evidence="7 13 15 30">Cytosol</location>
    </subcellularLocation>
    <subcellularLocation>
        <location evidence="6 7 15 30">Nucleus</location>
    </subcellularLocation>
    <subcellularLocation>
        <location evidence="8 10">Secreted</location>
        <location evidence="8 10">Extracellular exosome</location>
    </subcellularLocation>
    <text evidence="8 10 30">Normally localized in cytosol and nucleus, it can also be released extracellularly, in exosomes, by tumor and myeloid dendritic cells (PubMed:18055229, PubMed:18852879). Cytoplasmic retention is due to interaction with GET4 (PubMed:29042515).</text>
</comment>
<comment type="alternative products">
    <event type="alternative splicing"/>
    <isoform>
        <id>P46379-1</id>
        <name>1</name>
        <sequence type="displayed"/>
    </isoform>
    <isoform>
        <id>P46379-2</id>
        <name>2</name>
        <sequence type="described" ref="VSP_015695"/>
    </isoform>
    <isoform>
        <id>P46379-3</id>
        <name>3</name>
        <sequence type="described" ref="VSP_015695 VSP_030519"/>
    </isoform>
    <isoform>
        <id>P46379-4</id>
        <name>4</name>
        <sequence type="described" ref="VSP_015695 VSP_045910 VSP_045911 VSP_045912 VSP_045913"/>
    </isoform>
    <isoform>
        <id>P46379-5</id>
        <name>5</name>
        <sequence type="described" ref="VSP_015695 VSP_045913"/>
    </isoform>
</comment>
<comment type="tissue specificity">
    <text evidence="10">Expressed by immature dendritic cells (at protein level).</text>
</comment>
<comment type="domain">
    <text evidence="16 19 20 28 29">The ubiquitin-like domain mediates interaction with the E3 ubiquitin-protein ligase RNF126 which is responsible for the BAG6-dependent ubiquitination of client proteins (PubMed:21743475, PubMed:24981174, PubMed:27193484, PubMed:28104892). SGTA also binds this domain and competes with RNF126 to antagonize client protein ubiquitination and degradation (PubMed:28104892). The ubiquitin-like domain also mediates the interaction with USP13 (PubMed:24424410).</text>
</comment>
<comment type="PTM">
    <text evidence="6">Ricin can induce a cleavage by the caspase CASP3. The released C-terminal peptide induces apoptosis.</text>
</comment>
<comment type="PTM">
    <text evidence="12">(Microbial infection) In case of infection by L.pneumophila, ubiquitinated by the SCF(LegU1) complex.</text>
</comment>
<comment type="sequence caution" evidence="39">
    <conflict type="erroneous initiation">
        <sequence resource="EMBL-CDS" id="AAD18085"/>
    </conflict>
    <text>Extended N-terminus.</text>
</comment>
<comment type="sequence caution" evidence="39">
    <conflict type="erroneous initiation">
        <sequence resource="EMBL-CDS" id="BAB63390"/>
    </conflict>
    <text>Extended N-terminus.</text>
</comment>
<evidence type="ECO:0000250" key="1">
    <source>
        <dbReference type="UniProtKB" id="Q9Z1R2"/>
    </source>
</evidence>
<evidence type="ECO:0000255" key="2">
    <source>
        <dbReference type="PROSITE-ProRule" id="PRU00214"/>
    </source>
</evidence>
<evidence type="ECO:0000256" key="3">
    <source>
        <dbReference type="SAM" id="MobiDB-lite"/>
    </source>
</evidence>
<evidence type="ECO:0000269" key="4">
    <source>
    </source>
</evidence>
<evidence type="ECO:0000269" key="5">
    <source>
    </source>
</evidence>
<evidence type="ECO:0000269" key="6">
    <source>
    </source>
</evidence>
<evidence type="ECO:0000269" key="7">
    <source>
    </source>
</evidence>
<evidence type="ECO:0000269" key="8">
    <source>
    </source>
</evidence>
<evidence type="ECO:0000269" key="9">
    <source>
    </source>
</evidence>
<evidence type="ECO:0000269" key="10">
    <source>
    </source>
</evidence>
<evidence type="ECO:0000269" key="11">
    <source>
    </source>
</evidence>
<evidence type="ECO:0000269" key="12">
    <source>
    </source>
</evidence>
<evidence type="ECO:0000269" key="13">
    <source>
    </source>
</evidence>
<evidence type="ECO:0000269" key="14">
    <source>
    </source>
</evidence>
<evidence type="ECO:0000269" key="15">
    <source>
    </source>
</evidence>
<evidence type="ECO:0000269" key="16">
    <source>
    </source>
</evidence>
<evidence type="ECO:0000269" key="17">
    <source>
    </source>
</evidence>
<evidence type="ECO:0000269" key="18">
    <source>
    </source>
</evidence>
<evidence type="ECO:0000269" key="19">
    <source>
    </source>
</evidence>
<evidence type="ECO:0000269" key="20">
    <source>
    </source>
</evidence>
<evidence type="ECO:0000269" key="21">
    <source>
    </source>
</evidence>
<evidence type="ECO:0000269" key="22">
    <source>
    </source>
</evidence>
<evidence type="ECO:0000269" key="23">
    <source>
    </source>
</evidence>
<evidence type="ECO:0000269" key="24">
    <source>
    </source>
</evidence>
<evidence type="ECO:0000269" key="25">
    <source>
    </source>
</evidence>
<evidence type="ECO:0000269" key="26">
    <source>
    </source>
</evidence>
<evidence type="ECO:0000269" key="27">
    <source>
    </source>
</evidence>
<evidence type="ECO:0000269" key="28">
    <source>
    </source>
</evidence>
<evidence type="ECO:0000269" key="29">
    <source>
    </source>
</evidence>
<evidence type="ECO:0000269" key="30">
    <source>
    </source>
</evidence>
<evidence type="ECO:0000269" key="31">
    <source>
    </source>
</evidence>
<evidence type="ECO:0000269" key="32">
    <source ref="5"/>
</evidence>
<evidence type="ECO:0000269" key="33">
    <source ref="7"/>
</evidence>
<evidence type="ECO:0000303" key="34">
    <source>
    </source>
</evidence>
<evidence type="ECO:0000303" key="35">
    <source>
    </source>
</evidence>
<evidence type="ECO:0000303" key="36">
    <source>
    </source>
</evidence>
<evidence type="ECO:0000303" key="37">
    <source>
    </source>
</evidence>
<evidence type="ECO:0000303" key="38">
    <source>
    </source>
</evidence>
<evidence type="ECO:0000305" key="39"/>
<evidence type="ECO:0000305" key="40">
    <source>
    </source>
</evidence>
<evidence type="ECO:0000305" key="41">
    <source>
    </source>
</evidence>
<evidence type="ECO:0000312" key="42">
    <source>
        <dbReference type="HGNC" id="HGNC:13919"/>
    </source>
</evidence>
<evidence type="ECO:0007744" key="43">
    <source>
        <dbReference type="PDB" id="4WWR"/>
    </source>
</evidence>
<evidence type="ECO:0007744" key="44">
    <source>
        <dbReference type="PDB" id="4X86"/>
    </source>
</evidence>
<evidence type="ECO:0007744" key="45">
    <source>
        <dbReference type="PDB" id="6AU8"/>
    </source>
</evidence>
<evidence type="ECO:0007744" key="46">
    <source>
        <dbReference type="PDB" id="7RU9"/>
    </source>
</evidence>
<evidence type="ECO:0007744" key="47">
    <source>
        <dbReference type="PDB" id="7RUA"/>
    </source>
</evidence>
<evidence type="ECO:0007744" key="48">
    <source>
        <dbReference type="PDB" id="7RUC"/>
    </source>
</evidence>
<evidence type="ECO:0007744" key="49">
    <source>
    </source>
</evidence>
<evidence type="ECO:0007744" key="50">
    <source>
    </source>
</evidence>
<evidence type="ECO:0007744" key="51">
    <source>
    </source>
</evidence>
<evidence type="ECO:0007744" key="52">
    <source>
    </source>
</evidence>
<evidence type="ECO:0007744" key="53">
    <source>
    </source>
</evidence>
<evidence type="ECO:0007744" key="54">
    <source>
    </source>
</evidence>
<evidence type="ECO:0007744" key="55">
    <source>
    </source>
</evidence>
<evidence type="ECO:0007744" key="56">
    <source>
    </source>
</evidence>
<evidence type="ECO:0007744" key="57">
    <source>
    </source>
</evidence>
<evidence type="ECO:0007744" key="58">
    <source>
    </source>
</evidence>
<evidence type="ECO:0007829" key="59">
    <source>
        <dbReference type="PDB" id="1WX9"/>
    </source>
</evidence>
<evidence type="ECO:0007829" key="60">
    <source>
        <dbReference type="PDB" id="2N9P"/>
    </source>
</evidence>
<evidence type="ECO:0007829" key="61">
    <source>
        <dbReference type="PDB" id="4EEW"/>
    </source>
</evidence>
<evidence type="ECO:0007829" key="62">
    <source>
        <dbReference type="PDB" id="4X86"/>
    </source>
</evidence>
<evidence type="ECO:0007829" key="63">
    <source>
        <dbReference type="PDB" id="6AU8"/>
    </source>
</evidence>
<dbReference type="EMBL" id="M33519">
    <property type="protein sequence ID" value="AAA35587.1"/>
    <property type="molecule type" value="mRNA"/>
</dbReference>
<dbReference type="EMBL" id="M33521">
    <property type="protein sequence ID" value="AAA35588.1"/>
    <property type="molecule type" value="Genomic_DNA"/>
</dbReference>
<dbReference type="EMBL" id="M33520">
    <property type="protein sequence ID" value="AAA35588.1"/>
    <property type="status" value="JOINED"/>
    <property type="molecule type" value="Genomic_DNA"/>
</dbReference>
<dbReference type="EMBL" id="BX647244">
    <property type="protein sequence ID" value="CAI46045.1"/>
    <property type="molecule type" value="mRNA"/>
</dbReference>
<dbReference type="EMBL" id="AK302695">
    <property type="protein sequence ID" value="BAG63924.1"/>
    <property type="molecule type" value="mRNA"/>
</dbReference>
<dbReference type="EMBL" id="AK304879">
    <property type="protein sequence ID" value="BAG65616.1"/>
    <property type="molecule type" value="mRNA"/>
</dbReference>
<dbReference type="EMBL" id="AF129756">
    <property type="protein sequence ID" value="AAD18085.1"/>
    <property type="status" value="ALT_INIT"/>
    <property type="molecule type" value="Genomic_DNA"/>
</dbReference>
<dbReference type="EMBL" id="BA000025">
    <property type="protein sequence ID" value="BAB63390.1"/>
    <property type="status" value="ALT_INIT"/>
    <property type="molecule type" value="Genomic_DNA"/>
</dbReference>
<dbReference type="EMBL" id="AL662801">
    <property type="status" value="NOT_ANNOTATED_CDS"/>
    <property type="molecule type" value="Genomic_DNA"/>
</dbReference>
<dbReference type="EMBL" id="AL662847">
    <property type="status" value="NOT_ANNOTATED_CDS"/>
    <property type="molecule type" value="Genomic_DNA"/>
</dbReference>
<dbReference type="EMBL" id="AL670886">
    <property type="status" value="NOT_ANNOTATED_CDS"/>
    <property type="molecule type" value="Genomic_DNA"/>
</dbReference>
<dbReference type="EMBL" id="AL805934">
    <property type="status" value="NOT_ANNOTATED_CDS"/>
    <property type="molecule type" value="Genomic_DNA"/>
</dbReference>
<dbReference type="EMBL" id="BX511262">
    <property type="status" value="NOT_ANNOTATED_CDS"/>
    <property type="molecule type" value="Genomic_DNA"/>
</dbReference>
<dbReference type="EMBL" id="CR354443">
    <property type="status" value="NOT_ANNOTATED_CDS"/>
    <property type="molecule type" value="Genomic_DNA"/>
</dbReference>
<dbReference type="EMBL" id="CR753842">
    <property type="status" value="NOT_ANNOTATED_CDS"/>
    <property type="molecule type" value="Genomic_DNA"/>
</dbReference>
<dbReference type="EMBL" id="CR753892">
    <property type="status" value="NOT_ANNOTATED_CDS"/>
    <property type="molecule type" value="Genomic_DNA"/>
</dbReference>
<dbReference type="EMBL" id="CR759761">
    <property type="status" value="NOT_ANNOTATED_CDS"/>
    <property type="molecule type" value="Genomic_DNA"/>
</dbReference>
<dbReference type="EMBL" id="CH471081">
    <property type="protein sequence ID" value="EAX03455.1"/>
    <property type="molecule type" value="Genomic_DNA"/>
</dbReference>
<dbReference type="EMBL" id="BC003133">
    <property type="protein sequence ID" value="AAH03133.1"/>
    <property type="molecule type" value="mRNA"/>
</dbReference>
<dbReference type="CCDS" id="CCDS4709.1">
    <molecule id="P46379-2"/>
</dbReference>
<dbReference type="CCDS" id="CCDS56414.1">
    <molecule id="P46379-4"/>
</dbReference>
<dbReference type="CCDS" id="CCDS56415.1">
    <molecule id="P46379-5"/>
</dbReference>
<dbReference type="CCDS" id="CCDS93882.1">
    <molecule id="P46379-3"/>
</dbReference>
<dbReference type="PIR" id="A35098">
    <property type="entry name" value="A35098"/>
</dbReference>
<dbReference type="RefSeq" id="NP_001092004.1">
    <molecule id="P46379-2"/>
    <property type="nucleotide sequence ID" value="NM_001098534.2"/>
</dbReference>
<dbReference type="RefSeq" id="NP_001186626.1">
    <molecule id="P46379-4"/>
    <property type="nucleotide sequence ID" value="NM_001199697.2"/>
</dbReference>
<dbReference type="RefSeq" id="NP_001186627.1">
    <molecule id="P46379-5"/>
    <property type="nucleotide sequence ID" value="NM_001199698.2"/>
</dbReference>
<dbReference type="RefSeq" id="NP_001374869.1">
    <molecule id="P46379-5"/>
    <property type="nucleotide sequence ID" value="NM_001387940.1"/>
</dbReference>
<dbReference type="RefSeq" id="NP_001374885.1">
    <molecule id="P46379-5"/>
    <property type="nucleotide sequence ID" value="NM_001387956.1"/>
</dbReference>
<dbReference type="RefSeq" id="NP_001374890.1">
    <molecule id="P46379-2"/>
    <property type="nucleotide sequence ID" value="NM_001387961.1"/>
</dbReference>
<dbReference type="RefSeq" id="NP_001374915.1">
    <molecule id="P46379-2"/>
    <property type="nucleotide sequence ID" value="NM_001387986.1"/>
</dbReference>
<dbReference type="RefSeq" id="NP_001374918.1">
    <molecule id="P46379-3"/>
    <property type="nucleotide sequence ID" value="NM_001387989.1"/>
</dbReference>
<dbReference type="RefSeq" id="NP_001374923.1">
    <molecule id="P46379-3"/>
    <property type="nucleotide sequence ID" value="NM_001387994.1"/>
</dbReference>
<dbReference type="RefSeq" id="NP_001374925.1">
    <molecule id="P46379-3"/>
    <property type="nucleotide sequence ID" value="NM_001387996.1"/>
</dbReference>
<dbReference type="RefSeq" id="NP_001374928.1">
    <molecule id="P46379-5"/>
    <property type="nucleotide sequence ID" value="NM_001387999.1"/>
</dbReference>
<dbReference type="RefSeq" id="NP_001374930.1">
    <molecule id="P46379-5"/>
    <property type="nucleotide sequence ID" value="NM_001388001.1"/>
</dbReference>
<dbReference type="RefSeq" id="NP_001374940.1">
    <molecule id="P46379-3"/>
    <property type="nucleotide sequence ID" value="NM_001388011.1"/>
</dbReference>
<dbReference type="RefSeq" id="NP_001374943.1">
    <molecule id="P46379-5"/>
    <property type="nucleotide sequence ID" value="NM_001388014.1"/>
</dbReference>
<dbReference type="RefSeq" id="NP_001374944.1">
    <molecule id="P46379-2"/>
    <property type="nucleotide sequence ID" value="NM_001388015.1"/>
</dbReference>
<dbReference type="RefSeq" id="NP_001374946.1">
    <molecule id="P46379-2"/>
    <property type="nucleotide sequence ID" value="NM_001388017.1"/>
</dbReference>
<dbReference type="RefSeq" id="NP_001374947.1">
    <molecule id="P46379-2"/>
    <property type="nucleotide sequence ID" value="NM_001388018.1"/>
</dbReference>
<dbReference type="RefSeq" id="NP_001374949.1">
    <molecule id="P46379-3"/>
    <property type="nucleotide sequence ID" value="NM_001388020.1"/>
</dbReference>
<dbReference type="RefSeq" id="NP_004630.3">
    <property type="nucleotide sequence ID" value="NM_004639.3"/>
</dbReference>
<dbReference type="RefSeq" id="NP_542433.1">
    <molecule id="P46379-2"/>
    <property type="nucleotide sequence ID" value="NM_080702.3"/>
</dbReference>
<dbReference type="RefSeq" id="NP_542434.1">
    <molecule id="P46379-2"/>
    <property type="nucleotide sequence ID" value="NM_080703.3"/>
</dbReference>
<dbReference type="RefSeq" id="XP_016866776.1">
    <property type="nucleotide sequence ID" value="XM_017011287.1"/>
</dbReference>
<dbReference type="PDB" id="1WX9">
    <property type="method" value="NMR"/>
    <property type="chains" value="A=17-89"/>
</dbReference>
<dbReference type="PDB" id="2N9P">
    <property type="method" value="NMR"/>
    <property type="chains" value="C=17-101"/>
</dbReference>
<dbReference type="PDB" id="4DWF">
    <property type="method" value="X-ray"/>
    <property type="resolution" value="1.80 A"/>
    <property type="chains" value="A/B=13-101"/>
</dbReference>
<dbReference type="PDB" id="4EEW">
    <property type="method" value="X-ray"/>
    <property type="resolution" value="1.30 A"/>
    <property type="chains" value="A/B=1-87"/>
</dbReference>
<dbReference type="PDB" id="4WWR">
    <property type="method" value="X-ray"/>
    <property type="resolution" value="2.00 A"/>
    <property type="chains" value="A/C/E/G=1060-1111"/>
</dbReference>
<dbReference type="PDB" id="4X86">
    <property type="method" value="X-ray"/>
    <property type="resolution" value="1.85 A"/>
    <property type="chains" value="B=1048-1123"/>
</dbReference>
<dbReference type="PDB" id="6AU8">
    <property type="method" value="X-ray"/>
    <property type="resolution" value="1.80 A"/>
    <property type="chains" value="C=1008-1050"/>
</dbReference>
<dbReference type="PDB" id="7RU9">
    <property type="method" value="EM"/>
    <property type="resolution" value="3.30 A"/>
    <property type="chains" value="D/G=1004-1132"/>
</dbReference>
<dbReference type="PDB" id="7RUA">
    <property type="method" value="EM"/>
    <property type="resolution" value="3.40 A"/>
    <property type="chains" value="D/G=1004-1132"/>
</dbReference>
<dbReference type="PDB" id="7RUC">
    <property type="method" value="EM"/>
    <property type="resolution" value="3.60 A"/>
    <property type="chains" value="D/G=1004-1132"/>
</dbReference>
<dbReference type="PDBsum" id="1WX9"/>
<dbReference type="PDBsum" id="2N9P"/>
<dbReference type="PDBsum" id="4DWF"/>
<dbReference type="PDBsum" id="4EEW"/>
<dbReference type="PDBsum" id="4WWR"/>
<dbReference type="PDBsum" id="4X86"/>
<dbReference type="PDBsum" id="6AU8"/>
<dbReference type="PDBsum" id="7RU9"/>
<dbReference type="PDBsum" id="7RUA"/>
<dbReference type="PDBsum" id="7RUC"/>
<dbReference type="EMDB" id="EMD-24700"/>
<dbReference type="EMDB" id="EMD-24701"/>
<dbReference type="EMDB" id="EMD-24702"/>
<dbReference type="SMR" id="P46379"/>
<dbReference type="BioGRID" id="113647">
    <property type="interactions" value="490"/>
</dbReference>
<dbReference type="ComplexPortal" id="CPX-132">
    <property type="entry name" value="BAT3 complex"/>
</dbReference>
<dbReference type="CORUM" id="P46379"/>
<dbReference type="DIP" id="DIP-31191N"/>
<dbReference type="FunCoup" id="P46379">
    <property type="interactions" value="3901"/>
</dbReference>
<dbReference type="IntAct" id="P46379">
    <property type="interactions" value="440"/>
</dbReference>
<dbReference type="MINT" id="P46379"/>
<dbReference type="STRING" id="9606.ENSP00000365131"/>
<dbReference type="GlyCosmos" id="P46379">
    <property type="glycosylation" value="1 site, 1 glycan"/>
</dbReference>
<dbReference type="GlyGen" id="P46379">
    <property type="glycosylation" value="5 sites, 2 O-linked glycans (2 sites)"/>
</dbReference>
<dbReference type="iPTMnet" id="P46379"/>
<dbReference type="MetOSite" id="P46379"/>
<dbReference type="PhosphoSitePlus" id="P46379"/>
<dbReference type="SwissPalm" id="P46379"/>
<dbReference type="BioMuta" id="BAG6"/>
<dbReference type="DMDM" id="76800648"/>
<dbReference type="jPOST" id="P46379"/>
<dbReference type="MassIVE" id="P46379"/>
<dbReference type="PaxDb" id="9606-ENSP00000365131"/>
<dbReference type="PeptideAtlas" id="P46379"/>
<dbReference type="ProteomicsDB" id="17045"/>
<dbReference type="ProteomicsDB" id="29168"/>
<dbReference type="ProteomicsDB" id="55736">
    <molecule id="P46379-1"/>
</dbReference>
<dbReference type="ProteomicsDB" id="55737">
    <molecule id="P46379-2"/>
</dbReference>
<dbReference type="ProteomicsDB" id="55738">
    <molecule id="P46379-3"/>
</dbReference>
<dbReference type="Pumba" id="P46379"/>
<dbReference type="Antibodypedia" id="27346">
    <property type="antibodies" value="304 antibodies from 36 providers"/>
</dbReference>
<dbReference type="DNASU" id="7917"/>
<dbReference type="Ensembl" id="ENST00000211379.9">
    <molecule id="P46379-2"/>
    <property type="protein sequence ID" value="ENSP00000211379.5"/>
    <property type="gene ID" value="ENSG00000204463.14"/>
</dbReference>
<dbReference type="Ensembl" id="ENST00000361076.9">
    <molecule id="P46379-1"/>
    <property type="protein sequence ID" value="ENSP00000354368.5"/>
    <property type="gene ID" value="ENSG00000096155.15"/>
</dbReference>
<dbReference type="Ensembl" id="ENST00000362049.10">
    <molecule id="P46379-5"/>
    <property type="protein sequence ID" value="ENSP00000354875.6"/>
    <property type="gene ID" value="ENSG00000204463.14"/>
</dbReference>
<dbReference type="Ensembl" id="ENST00000375976.8">
    <molecule id="P46379-2"/>
    <property type="protein sequence ID" value="ENSP00000365143.4"/>
    <property type="gene ID" value="ENSG00000204463.14"/>
</dbReference>
<dbReference type="Ensembl" id="ENST00000383446.8">
    <molecule id="P46379-2"/>
    <property type="protein sequence ID" value="ENSP00000372938.4"/>
    <property type="gene ID" value="ENSG00000096155.15"/>
</dbReference>
<dbReference type="Ensembl" id="ENST00000383448.6">
    <molecule id="P46379-2"/>
    <property type="protein sequence ID" value="ENSP00000372940.2"/>
    <property type="gene ID" value="ENSG00000096155.15"/>
</dbReference>
<dbReference type="Ensembl" id="ENST00000417144.5">
    <molecule id="P46379-2"/>
    <property type="protein sequence ID" value="ENSP00000412110.1"/>
    <property type="gene ID" value="ENSG00000229524.10"/>
</dbReference>
<dbReference type="Ensembl" id="ENST00000419847.5">
    <molecule id="P46379-2"/>
    <property type="protein sequence ID" value="ENSP00000389121.1"/>
    <property type="gene ID" value="ENSG00000233348.10"/>
</dbReference>
<dbReference type="Ensembl" id="ENST00000439687.6">
    <molecule id="P46379-4"/>
    <property type="protein sequence ID" value="ENSP00000402856.2"/>
    <property type="gene ID" value="ENSG00000204463.14"/>
</dbReference>
<dbReference type="Ensembl" id="ENST00000442479.6">
    <molecule id="P46379-2"/>
    <property type="protein sequence ID" value="ENSP00000413698.2"/>
    <property type="gene ID" value="ENSG00000229524.10"/>
</dbReference>
<dbReference type="Ensembl" id="ENST00000443182.6">
    <molecule id="P46379-2"/>
    <property type="protein sequence ID" value="ENSP00000410156.2"/>
    <property type="gene ID" value="ENSG00000233348.10"/>
</dbReference>
<dbReference type="Ensembl" id="ENST00000449450.6">
    <molecule id="P46379-1"/>
    <property type="protein sequence ID" value="ENSP00000397894.2"/>
    <property type="gene ID" value="ENSG00000229524.10"/>
</dbReference>
<dbReference type="Ensembl" id="ENST00000451932.6">
    <molecule id="P46379-1"/>
    <property type="protein sequence ID" value="ENSP00000390966.2"/>
    <property type="gene ID" value="ENSG00000233348.10"/>
</dbReference>
<dbReference type="Ensembl" id="ENST00000551350.5">
    <molecule id="P46379-5"/>
    <property type="protein sequence ID" value="ENSP00000447546.2"/>
    <property type="gene ID" value="ENSG00000229524.10"/>
</dbReference>
<dbReference type="Ensembl" id="ENST00000552116.2">
    <molecule id="P46379-5"/>
    <property type="protein sequence ID" value="ENSP00000447946.2"/>
    <property type="gene ID" value="ENSG00000233348.10"/>
</dbReference>
<dbReference type="Ensembl" id="ENST00000552605.4">
    <molecule id="P46379-5"/>
    <property type="protein sequence ID" value="ENSP00000446525.2"/>
    <property type="gene ID" value="ENSG00000096155.15"/>
</dbReference>
<dbReference type="Ensembl" id="ENST00000613474.4">
    <molecule id="P46379-4"/>
    <property type="protein sequence ID" value="ENSP00000478966.1"/>
    <property type="gene ID" value="ENSG00000227761.10"/>
</dbReference>
<dbReference type="Ensembl" id="ENST00000615143.1">
    <molecule id="P46379-4"/>
    <property type="protein sequence ID" value="ENSP00000482413.1"/>
    <property type="gene ID" value="ENSG00000229524.10"/>
</dbReference>
<dbReference type="Ensembl" id="ENST00000615224.2">
    <molecule id="P46379-4"/>
    <property type="protein sequence ID" value="ENSP00000477951.1"/>
    <property type="gene ID" value="ENSG00000228760.10"/>
</dbReference>
<dbReference type="Ensembl" id="ENST00000615725.4">
    <molecule id="P46379-4"/>
    <property type="protein sequence ID" value="ENSP00000479238.1"/>
    <property type="gene ID" value="ENSG00000233348.10"/>
</dbReference>
<dbReference type="Ensembl" id="ENST00000617635.2">
    <molecule id="P46379-4"/>
    <property type="protein sequence ID" value="ENSP00000484238.1"/>
    <property type="gene ID" value="ENSG00000096155.15"/>
</dbReference>
<dbReference type="Ensembl" id="ENST00000621056.2">
    <molecule id="P46379-4"/>
    <property type="protein sequence ID" value="ENSP00000477867.1"/>
    <property type="gene ID" value="ENSG00000234651.10"/>
</dbReference>
<dbReference type="Ensembl" id="ENST00000676615.2">
    <molecule id="P46379-3"/>
    <property type="protein sequence ID" value="ENSP00000502941.1"/>
    <property type="gene ID" value="ENSG00000204463.14"/>
</dbReference>
<dbReference type="GeneID" id="7917"/>
<dbReference type="KEGG" id="hsa:7917"/>
<dbReference type="MANE-Select" id="ENST00000676615.2">
    <molecule id="P46379-3"/>
    <property type="protein sequence ID" value="ENSP00000502941.1"/>
    <property type="RefSeq nucleotide sequence ID" value="NM_001387994.1"/>
    <property type="RefSeq protein sequence ID" value="NP_001374923.1"/>
</dbReference>
<dbReference type="UCSC" id="uc003nvf.4">
    <molecule id="P46379-1"/>
    <property type="organism name" value="human"/>
</dbReference>
<dbReference type="AGR" id="HGNC:13919"/>
<dbReference type="CTD" id="7917"/>
<dbReference type="DisGeNET" id="7917"/>
<dbReference type="GeneCards" id="BAG6"/>
<dbReference type="HGNC" id="HGNC:13919">
    <property type="gene designation" value="BAG6"/>
</dbReference>
<dbReference type="HPA" id="ENSG00000204463">
    <property type="expression patterns" value="Low tissue specificity"/>
</dbReference>
<dbReference type="MIM" id="142590">
    <property type="type" value="gene"/>
</dbReference>
<dbReference type="neXtProt" id="NX_P46379"/>
<dbReference type="OpenTargets" id="ENSG00000204463"/>
<dbReference type="PharmGKB" id="PA25264"/>
<dbReference type="VEuPathDB" id="HostDB:ENSG00000204463"/>
<dbReference type="eggNOG" id="KOG4248">
    <property type="taxonomic scope" value="Eukaryota"/>
</dbReference>
<dbReference type="GeneTree" id="ENSGT00390000016199"/>
<dbReference type="HOGENOM" id="CLU_012159_0_0_1"/>
<dbReference type="InParanoid" id="P46379"/>
<dbReference type="OrthoDB" id="1885901at2759"/>
<dbReference type="PAN-GO" id="P46379">
    <property type="GO annotations" value="4 GO annotations based on evolutionary models"/>
</dbReference>
<dbReference type="PhylomeDB" id="P46379"/>
<dbReference type="TreeFam" id="TF328437"/>
<dbReference type="PathwayCommons" id="P46379"/>
<dbReference type="Reactome" id="R-HSA-9609523">
    <property type="pathway name" value="Insertion of tail-anchored proteins into the endoplasmic reticulum membrane"/>
</dbReference>
<dbReference type="SignaLink" id="P46379"/>
<dbReference type="SIGNOR" id="P46379"/>
<dbReference type="BioGRID-ORCS" id="7917">
    <property type="hits" value="50 hits in 1161 CRISPR screens"/>
</dbReference>
<dbReference type="ChiTaRS" id="BAG6">
    <property type="organism name" value="human"/>
</dbReference>
<dbReference type="EvolutionaryTrace" id="P46379"/>
<dbReference type="GeneWiki" id="HLA-B_associated_transcript_3"/>
<dbReference type="GenomeRNAi" id="7917"/>
<dbReference type="Pharos" id="P46379">
    <property type="development level" value="Tbio"/>
</dbReference>
<dbReference type="PRO" id="PR:P46379"/>
<dbReference type="Proteomes" id="UP000005640">
    <property type="component" value="Chromosome 6"/>
</dbReference>
<dbReference type="RNAct" id="P46379">
    <property type="molecule type" value="protein"/>
</dbReference>
<dbReference type="Bgee" id="ENSG00000204463">
    <property type="expression patterns" value="Expressed in right testis and 95 other cell types or tissues"/>
</dbReference>
<dbReference type="ExpressionAtlas" id="P46379">
    <property type="expression patterns" value="baseline and differential"/>
</dbReference>
<dbReference type="GO" id="GO:0071818">
    <property type="term" value="C:BAT3 complex"/>
    <property type="evidence" value="ECO:0000314"/>
    <property type="project" value="UniProtKB"/>
</dbReference>
<dbReference type="GO" id="GO:0005737">
    <property type="term" value="C:cytoplasm"/>
    <property type="evidence" value="ECO:0000314"/>
    <property type="project" value="ParkinsonsUK-UCL"/>
</dbReference>
<dbReference type="GO" id="GO:0005829">
    <property type="term" value="C:cytosol"/>
    <property type="evidence" value="ECO:0000314"/>
    <property type="project" value="HPA"/>
</dbReference>
<dbReference type="GO" id="GO:0070062">
    <property type="term" value="C:extracellular exosome"/>
    <property type="evidence" value="ECO:0000314"/>
    <property type="project" value="UniProtKB"/>
</dbReference>
<dbReference type="GO" id="GO:0043231">
    <property type="term" value="C:intracellular membrane-bounded organelle"/>
    <property type="evidence" value="ECO:0000314"/>
    <property type="project" value="HPA"/>
</dbReference>
<dbReference type="GO" id="GO:0016020">
    <property type="term" value="C:membrane"/>
    <property type="evidence" value="ECO:0000314"/>
    <property type="project" value="ParkinsonsUK-UCL"/>
</dbReference>
<dbReference type="GO" id="GO:0005654">
    <property type="term" value="C:nucleoplasm"/>
    <property type="evidence" value="ECO:0000314"/>
    <property type="project" value="HPA"/>
</dbReference>
<dbReference type="GO" id="GO:0005634">
    <property type="term" value="C:nucleus"/>
    <property type="evidence" value="ECO:0000314"/>
    <property type="project" value="UniProtKB"/>
</dbReference>
<dbReference type="GO" id="GO:0030544">
    <property type="term" value="F:Hsp70 protein binding"/>
    <property type="evidence" value="ECO:0007669"/>
    <property type="project" value="Ensembl"/>
</dbReference>
<dbReference type="GO" id="GO:0042802">
    <property type="term" value="F:identical protein binding"/>
    <property type="evidence" value="ECO:0000353"/>
    <property type="project" value="IntAct"/>
</dbReference>
<dbReference type="GO" id="GO:0051787">
    <property type="term" value="F:misfolded protein binding"/>
    <property type="evidence" value="ECO:0000314"/>
    <property type="project" value="ParkinsonsUK-UCL"/>
</dbReference>
<dbReference type="GO" id="GO:0060090">
    <property type="term" value="F:molecular adaptor activity"/>
    <property type="evidence" value="ECO:0000269"/>
    <property type="project" value="DisProt"/>
</dbReference>
<dbReference type="GO" id="GO:0140677">
    <property type="term" value="F:molecular function activator activity"/>
    <property type="evidence" value="ECO:0000270"/>
    <property type="project" value="DisProt"/>
</dbReference>
<dbReference type="GO" id="GO:0031593">
    <property type="term" value="F:polyubiquitin modification-dependent protein binding"/>
    <property type="evidence" value="ECO:0000250"/>
    <property type="project" value="UniProtKB"/>
</dbReference>
<dbReference type="GO" id="GO:0070628">
    <property type="term" value="F:proteasome binding"/>
    <property type="evidence" value="ECO:0000250"/>
    <property type="project" value="UniProtKB"/>
</dbReference>
<dbReference type="GO" id="GO:0140597">
    <property type="term" value="F:protein carrier chaperone"/>
    <property type="evidence" value="ECO:0000314"/>
    <property type="project" value="ParkinsonsUK-UCL"/>
</dbReference>
<dbReference type="GO" id="GO:0048018">
    <property type="term" value="F:receptor ligand activity"/>
    <property type="evidence" value="ECO:0000314"/>
    <property type="project" value="UniProt"/>
</dbReference>
<dbReference type="GO" id="GO:0043022">
    <property type="term" value="F:ribosome binding"/>
    <property type="evidence" value="ECO:0000314"/>
    <property type="project" value="UniProtKB"/>
</dbReference>
<dbReference type="GO" id="GO:0005102">
    <property type="term" value="F:signaling receptor binding"/>
    <property type="evidence" value="ECO:0000353"/>
    <property type="project" value="UniProtKB"/>
</dbReference>
<dbReference type="GO" id="GO:0031625">
    <property type="term" value="F:ubiquitin protein ligase binding"/>
    <property type="evidence" value="ECO:0000353"/>
    <property type="project" value="UniProtKB"/>
</dbReference>
<dbReference type="GO" id="GO:1990381">
    <property type="term" value="F:ubiquitin-specific protease binding"/>
    <property type="evidence" value="ECO:0000353"/>
    <property type="project" value="ParkinsonsUK-UCL"/>
</dbReference>
<dbReference type="GO" id="GO:0006915">
    <property type="term" value="P:apoptotic process"/>
    <property type="evidence" value="ECO:0000314"/>
    <property type="project" value="UniProtKB"/>
</dbReference>
<dbReference type="GO" id="GO:0007420">
    <property type="term" value="P:brain development"/>
    <property type="evidence" value="ECO:0000250"/>
    <property type="project" value="UniProtKB"/>
</dbReference>
<dbReference type="GO" id="GO:0030154">
    <property type="term" value="P:cell differentiation"/>
    <property type="evidence" value="ECO:0007669"/>
    <property type="project" value="UniProtKB-KW"/>
</dbReference>
<dbReference type="GO" id="GO:0006325">
    <property type="term" value="P:chromatin organization"/>
    <property type="evidence" value="ECO:0007669"/>
    <property type="project" value="UniProtKB-KW"/>
</dbReference>
<dbReference type="GO" id="GO:0061857">
    <property type="term" value="P:endoplasmic reticulum stress-induced pre-emptive quality control"/>
    <property type="evidence" value="ECO:0000315"/>
    <property type="project" value="UniProtKB"/>
</dbReference>
<dbReference type="GO" id="GO:0036503">
    <property type="term" value="P:ERAD pathway"/>
    <property type="evidence" value="ECO:0000314"/>
    <property type="project" value="UniProtKB"/>
</dbReference>
<dbReference type="GO" id="GO:0002429">
    <property type="term" value="P:immune response-activating cell surface receptor signaling pathway"/>
    <property type="evidence" value="ECO:0000314"/>
    <property type="project" value="UniProtKB"/>
</dbReference>
<dbReference type="GO" id="GO:0018393">
    <property type="term" value="P:internal peptidyl-lysine acetylation"/>
    <property type="evidence" value="ECO:0000314"/>
    <property type="project" value="UniProtKB"/>
</dbReference>
<dbReference type="GO" id="GO:0042771">
    <property type="term" value="P:intrinsic apoptotic signaling pathway in response to DNA damage by p53 class mediator"/>
    <property type="evidence" value="ECO:0000315"/>
    <property type="project" value="UniProtKB"/>
</dbReference>
<dbReference type="GO" id="GO:0070059">
    <property type="term" value="P:intrinsic apoptotic signaling pathway in response to endoplasmic reticulum stress"/>
    <property type="evidence" value="ECO:0000250"/>
    <property type="project" value="UniProtKB"/>
</dbReference>
<dbReference type="GO" id="GO:0001822">
    <property type="term" value="P:kidney development"/>
    <property type="evidence" value="ECO:0000250"/>
    <property type="project" value="UniProtKB"/>
</dbReference>
<dbReference type="GO" id="GO:0030324">
    <property type="term" value="P:lung development"/>
    <property type="evidence" value="ECO:0000250"/>
    <property type="project" value="UniProtKB"/>
</dbReference>
<dbReference type="GO" id="GO:0036506">
    <property type="term" value="P:maintenance of unfolded protein"/>
    <property type="evidence" value="ECO:0000315"/>
    <property type="project" value="ParkinsonsUK-UCL"/>
</dbReference>
<dbReference type="GO" id="GO:0030101">
    <property type="term" value="P:natural killer cell activation"/>
    <property type="evidence" value="ECO:0000314"/>
    <property type="project" value="UniProtKB"/>
</dbReference>
<dbReference type="GO" id="GO:0043066">
    <property type="term" value="P:negative regulation of apoptotic process"/>
    <property type="evidence" value="ECO:0007669"/>
    <property type="project" value="Ensembl"/>
</dbReference>
<dbReference type="GO" id="GO:0032435">
    <property type="term" value="P:negative regulation of proteasomal ubiquitin-dependent protein catabolic process"/>
    <property type="evidence" value="ECO:0000250"/>
    <property type="project" value="UniProtKB"/>
</dbReference>
<dbReference type="GO" id="GO:0045861">
    <property type="term" value="P:negative regulation of proteolysis"/>
    <property type="evidence" value="ECO:0000250"/>
    <property type="project" value="UniProtKB"/>
</dbReference>
<dbReference type="GO" id="GO:0051132">
    <property type="term" value="P:NK T cell activation"/>
    <property type="evidence" value="ECO:0000314"/>
    <property type="project" value="UniProt"/>
</dbReference>
<dbReference type="GO" id="GO:1904294">
    <property type="term" value="P:positive regulation of ERAD pathway"/>
    <property type="evidence" value="ECO:0000315"/>
    <property type="project" value="ParkinsonsUK-UCL"/>
</dbReference>
<dbReference type="GO" id="GO:0006620">
    <property type="term" value="P:post-translational protein targeting to endoplasmic reticulum membrane"/>
    <property type="evidence" value="ECO:0000314"/>
    <property type="project" value="ComplexPortal"/>
</dbReference>
<dbReference type="GO" id="GO:0010498">
    <property type="term" value="P:proteasomal protein catabolic process"/>
    <property type="evidence" value="ECO:0000315"/>
    <property type="project" value="UniProtKB"/>
</dbReference>
<dbReference type="GO" id="GO:0043161">
    <property type="term" value="P:proteasome-mediated ubiquitin-dependent protein catabolic process"/>
    <property type="evidence" value="ECO:0007669"/>
    <property type="project" value="Ensembl"/>
</dbReference>
<dbReference type="GO" id="GO:0050821">
    <property type="term" value="P:protein stabilization"/>
    <property type="evidence" value="ECO:0000250"/>
    <property type="project" value="UniProtKB"/>
</dbReference>
<dbReference type="GO" id="GO:0045995">
    <property type="term" value="P:regulation of embryonic development"/>
    <property type="evidence" value="ECO:0000250"/>
    <property type="project" value="UniProtKB"/>
</dbReference>
<dbReference type="GO" id="GO:0031647">
    <property type="term" value="P:regulation of protein stability"/>
    <property type="evidence" value="ECO:0000314"/>
    <property type="project" value="ComplexPortal"/>
</dbReference>
<dbReference type="GO" id="GO:0007283">
    <property type="term" value="P:spermatogenesis"/>
    <property type="evidence" value="ECO:0000250"/>
    <property type="project" value="UniProtKB"/>
</dbReference>
<dbReference type="GO" id="GO:0007130">
    <property type="term" value="P:synaptonemal complex assembly"/>
    <property type="evidence" value="ECO:0000250"/>
    <property type="project" value="UniProtKB"/>
</dbReference>
<dbReference type="GO" id="GO:0071816">
    <property type="term" value="P:tail-anchored membrane protein insertion into ER membrane"/>
    <property type="evidence" value="ECO:0000314"/>
    <property type="project" value="UniProtKB"/>
</dbReference>
<dbReference type="GO" id="GO:0006511">
    <property type="term" value="P:ubiquitin-dependent protein catabolic process"/>
    <property type="evidence" value="ECO:0000314"/>
    <property type="project" value="ComplexPortal"/>
</dbReference>
<dbReference type="CDD" id="cd01809">
    <property type="entry name" value="Ubl_BAG6"/>
    <property type="match status" value="1"/>
</dbReference>
<dbReference type="DisProt" id="DP02829"/>
<dbReference type="FunFam" id="3.10.20.90:FF:000041">
    <property type="entry name" value="large proline-rich protein BAG6 isoform X1"/>
    <property type="match status" value="1"/>
</dbReference>
<dbReference type="Gene3D" id="3.10.20.90">
    <property type="entry name" value="Phosphatidylinositol 3-kinase Catalytic Subunit, Chain A, domain 1"/>
    <property type="match status" value="1"/>
</dbReference>
<dbReference type="InterPro" id="IPR021925">
    <property type="entry name" value="BAG6"/>
</dbReference>
<dbReference type="InterPro" id="IPR048926">
    <property type="entry name" value="Bag6_BAGS"/>
</dbReference>
<dbReference type="InterPro" id="IPR000626">
    <property type="entry name" value="Ubiquitin-like_dom"/>
</dbReference>
<dbReference type="InterPro" id="IPR029071">
    <property type="entry name" value="Ubiquitin-like_domsf"/>
</dbReference>
<dbReference type="InterPro" id="IPR019954">
    <property type="entry name" value="Ubiquitin_CS"/>
</dbReference>
<dbReference type="PANTHER" id="PTHR15204">
    <property type="entry name" value="LARGE PROLINE-RICH PROTEIN BAG6"/>
    <property type="match status" value="1"/>
</dbReference>
<dbReference type="PANTHER" id="PTHR15204:SF0">
    <property type="entry name" value="LARGE PROLINE-RICH PROTEIN BAG6"/>
    <property type="match status" value="1"/>
</dbReference>
<dbReference type="Pfam" id="PF12057">
    <property type="entry name" value="BAG6"/>
    <property type="match status" value="1"/>
</dbReference>
<dbReference type="Pfam" id="PF20960">
    <property type="entry name" value="Bag6_BAGS"/>
    <property type="match status" value="1"/>
</dbReference>
<dbReference type="Pfam" id="PF00240">
    <property type="entry name" value="ubiquitin"/>
    <property type="match status" value="1"/>
</dbReference>
<dbReference type="SMART" id="SM00213">
    <property type="entry name" value="UBQ"/>
    <property type="match status" value="1"/>
</dbReference>
<dbReference type="SUPFAM" id="SSF101447">
    <property type="entry name" value="Formin homology 2 domain (FH2 domain)"/>
    <property type="match status" value="1"/>
</dbReference>
<dbReference type="SUPFAM" id="SSF54236">
    <property type="entry name" value="Ubiquitin-like"/>
    <property type="match status" value="1"/>
</dbReference>
<dbReference type="PROSITE" id="PS00299">
    <property type="entry name" value="UBIQUITIN_1"/>
    <property type="match status" value="1"/>
</dbReference>
<dbReference type="PROSITE" id="PS50053">
    <property type="entry name" value="UBIQUITIN_2"/>
    <property type="match status" value="1"/>
</dbReference>
<feature type="chain" id="PRO_0000114897" description="Large proline-rich protein BAG6">
    <location>
        <begin position="1"/>
        <end position="1132"/>
    </location>
</feature>
<feature type="domain" description="Ubiquitin-like" evidence="2">
    <location>
        <begin position="17"/>
        <end position="92"/>
    </location>
</feature>
<feature type="repeat" description="1" evidence="38">
    <location>
        <begin position="242"/>
        <end position="270"/>
    </location>
</feature>
<feature type="repeat" description="2" evidence="38">
    <location>
        <begin position="415"/>
        <end position="443"/>
    </location>
</feature>
<feature type="repeat" description="3" evidence="38">
    <location>
        <begin position="574"/>
        <end position="602"/>
    </location>
</feature>
<feature type="repeat" description="4" evidence="38">
    <location>
        <begin position="608"/>
        <end position="636"/>
    </location>
</feature>
<feature type="region of interest" description="Disordered" evidence="3">
    <location>
        <begin position="87"/>
        <end position="126"/>
    </location>
</feature>
<feature type="region of interest" description="Disordered" evidence="3">
    <location>
        <begin position="189"/>
        <end position="272"/>
    </location>
</feature>
<feature type="region of interest" description="4 X 29 AA approximate repeats" evidence="38">
    <location>
        <begin position="242"/>
        <end position="636"/>
    </location>
</feature>
<feature type="region of interest" description="Disordered" evidence="3">
    <location>
        <begin position="385"/>
        <end position="441"/>
    </location>
</feature>
<feature type="region of interest" description="Disordered" evidence="3">
    <location>
        <begin position="461"/>
        <end position="528"/>
    </location>
</feature>
<feature type="region of interest" description="Disordered" evidence="3">
    <location>
        <begin position="560"/>
        <end position="603"/>
    </location>
</feature>
<feature type="region of interest" description="Disordered" evidence="3">
    <location>
        <begin position="651"/>
        <end position="692"/>
    </location>
</feature>
<feature type="region of interest" description="Disordered" evidence="3">
    <location>
        <begin position="947"/>
        <end position="1132"/>
    </location>
</feature>
<feature type="region of interest" description="Required for interaction with GET4" evidence="22 30">
    <location>
        <begin position="1010"/>
        <end position="1040"/>
    </location>
</feature>
<feature type="region of interest" description="Sufficient for the delivery of client proteins to the endoplasmic reticulum" evidence="29">
    <location>
        <begin position="1022"/>
        <end position="1132"/>
    </location>
</feature>
<feature type="region of interest" description="BAG-similar domain, required and sufficient for interaction with UBL4A" evidence="22 23">
    <location>
        <begin position="1058"/>
        <end position="1115"/>
    </location>
</feature>
<feature type="short sequence motif" description="Nuclear localization site" evidence="40 41">
    <location>
        <begin position="1012"/>
        <end position="1054"/>
    </location>
</feature>
<feature type="compositionally biased region" description="Low complexity" evidence="3">
    <location>
        <begin position="95"/>
        <end position="108"/>
    </location>
</feature>
<feature type="compositionally biased region" description="Pro residues" evidence="3">
    <location>
        <begin position="200"/>
        <end position="210"/>
    </location>
</feature>
<feature type="compositionally biased region" description="Pro residues" evidence="3">
    <location>
        <begin position="251"/>
        <end position="262"/>
    </location>
</feature>
<feature type="compositionally biased region" description="Pro residues" evidence="3">
    <location>
        <begin position="393"/>
        <end position="407"/>
    </location>
</feature>
<feature type="compositionally biased region" description="Low complexity" evidence="3">
    <location>
        <begin position="408"/>
        <end position="426"/>
    </location>
</feature>
<feature type="compositionally biased region" description="Pro residues" evidence="3">
    <location>
        <begin position="427"/>
        <end position="438"/>
    </location>
</feature>
<feature type="compositionally biased region" description="Pro residues" evidence="3">
    <location>
        <begin position="507"/>
        <end position="520"/>
    </location>
</feature>
<feature type="compositionally biased region" description="Low complexity" evidence="3">
    <location>
        <begin position="569"/>
        <end position="586"/>
    </location>
</feature>
<feature type="compositionally biased region" description="Pro residues" evidence="3">
    <location>
        <begin position="588"/>
        <end position="599"/>
    </location>
</feature>
<feature type="compositionally biased region" description="Pro residues" evidence="3">
    <location>
        <begin position="656"/>
        <end position="680"/>
    </location>
</feature>
<feature type="compositionally biased region" description="Gly residues" evidence="3">
    <location>
        <begin position="681"/>
        <end position="692"/>
    </location>
</feature>
<feature type="compositionally biased region" description="Low complexity" evidence="3">
    <location>
        <begin position="1005"/>
        <end position="1020"/>
    </location>
</feature>
<feature type="compositionally biased region" description="Low complexity" evidence="3">
    <location>
        <begin position="1066"/>
        <end position="1076"/>
    </location>
</feature>
<feature type="site" description="Cleavage; by CASP3" evidence="6">
    <location>
        <begin position="1001"/>
        <end position="1002"/>
    </location>
</feature>
<feature type="modified residue" description="N-acetylmethionine" evidence="53">
    <location>
        <position position="1"/>
    </location>
</feature>
<feature type="modified residue" description="Phosphoserine" evidence="58">
    <location>
        <position position="96"/>
    </location>
</feature>
<feature type="modified residue" description="Phosphoserine" evidence="50 52 57">
    <location>
        <position position="113"/>
    </location>
</feature>
<feature type="modified residue" description="Phosphothreonine" evidence="58">
    <location>
        <position position="117"/>
    </location>
</feature>
<feature type="modified residue" description="Phosphothreonine" evidence="55">
    <location>
        <position position="350"/>
    </location>
</feature>
<feature type="modified residue" description="Phosphoserine" evidence="54 55 56 57">
    <location>
        <position position="964"/>
    </location>
</feature>
<feature type="modified residue" description="Phosphoserine" evidence="51 52 54 55 56 57">
    <location>
        <position position="973"/>
    </location>
</feature>
<feature type="modified residue" description="Phosphothreonine" evidence="57">
    <location>
        <position position="1053"/>
    </location>
</feature>
<feature type="modified residue" description="Phosphoserine" evidence="52 57">
    <location>
        <position position="1081"/>
    </location>
</feature>
<feature type="modified residue" description="Phosphoserine" evidence="49 52 55 57">
    <location>
        <position position="1117"/>
    </location>
</feature>
<feature type="splice variant" id="VSP_015695" description="In isoform 2, isoform 3, isoform 4 and isoform 5." evidence="34 35 37">
    <location>
        <begin position="185"/>
        <end position="190"/>
    </location>
</feature>
<feature type="splice variant" id="VSP_030519" description="In isoform 3." evidence="39">
    <original>G</original>
    <variation>GSTLIQLPSLPPEFMHAVAHQITHQAMVAAVASAAAG</variation>
    <location>
        <position position="489"/>
    </location>
</feature>
<feature type="splice variant" id="VSP_045910" description="In isoform 4." evidence="34">
    <location>
        <position position="527"/>
    </location>
</feature>
<feature type="splice variant" id="VSP_045911" description="In isoform 4." evidence="34">
    <location>
        <begin position="561"/>
        <end position="685"/>
    </location>
</feature>
<feature type="splice variant" id="VSP_045912" description="In isoform 4." evidence="34">
    <location>
        <begin position="969"/>
        <end position="1016"/>
    </location>
</feature>
<feature type="splice variant" id="VSP_045913" description="In isoform 4 and isoform 5." evidence="34">
    <location>
        <begin position="1053"/>
        <end position="1101"/>
    </location>
</feature>
<feature type="sequence variant" id="VAR_023531" description="In dbSNP:rs1052486." evidence="4 5 14 32 33">
    <original>S</original>
    <variation>P</variation>
    <location>
        <position position="625"/>
    </location>
</feature>
<feature type="sequence variant" id="VAR_037150" description="In dbSNP:rs11548856.">
    <original>A</original>
    <variation>V</variation>
    <location>
        <position position="728"/>
    </location>
</feature>
<feature type="mutagenesis site" description="Abolishes cleavage by the caspase CASP3." evidence="6">
    <original>D</original>
    <variation>A</variation>
    <location>
        <position position="1001"/>
    </location>
</feature>
<feature type="mutagenesis site" description="Decreases interaction with GET4. Localizes in the nucleus and cytoplasm. Decreases interaction with GET4, localizes in the nucleus and increases GET4 ubiquitination; when associated with A-1042." evidence="30">
    <original>W</original>
    <variation>A</variation>
    <location>
        <position position="1010"/>
    </location>
</feature>
<feature type="mutagenesis site" description="Decreases interaction with GET4. Localizes in the nucleus. Decreases interaction with GET4, localizes in the nucleus and increases GET4 ubiquitination; when associated with A-1042." evidence="30">
    <original>W</original>
    <variation>A</variation>
    <location>
        <position position="1018"/>
    </location>
</feature>
<feature type="mutagenesis site" description="No effect on interaction with GET4 and KPNA2." evidence="30">
    <original>RK</original>
    <variation>SL</variation>
    <location>
        <begin position="1030"/>
        <end position="1031"/>
    </location>
</feature>
<feature type="mutagenesis site" description="Decreases interaction with GET4. Localizes in the nucleus. Decreases interaction with GET4, localizes in the nucleus and increases GET4 ubiquitination; when associated with A-1010 or A-1018." evidence="30">
    <original>Y</original>
    <variation>A</variation>
    <location>
        <position position="1042"/>
    </location>
</feature>
<feature type="mutagenesis site" description="No effect on interaction with GET4. Inhibits interaction with KPNA2." evidence="30">
    <original>KR</original>
    <variation>SL</variation>
    <location>
        <begin position="1049"/>
        <end position="1050"/>
    </location>
</feature>
<feature type="mutagenesis site" description="No effect on interaction with UBL4A. No effect on interaction with UBL4A; when associated with A-1078. Abolishes on interaction with UBL4A; when associated with R-1085." evidence="23">
    <original>V</original>
    <variation>R</variation>
    <location>
        <position position="1067"/>
    </location>
</feature>
<feature type="mutagenesis site" description="No effect on interaction with UBL4A. No effect on interaction with UBL4A; when associated with R-1067 or R-1085." evidence="23">
    <original>P</original>
    <variation>A</variation>
    <location>
        <position position="1078"/>
    </location>
</feature>
<feature type="mutagenesis site" description="No effect on interaction with UBL4A. No effect on interaction with UBL4A; when associated with R-1078. Abolishes on interaction with UBL4A; when associated with R-1067." evidence="23">
    <original>L</original>
    <variation>R</variation>
    <location>
        <position position="1085"/>
    </location>
</feature>
<feature type="mutagenesis site" description="No effect on interaction with UBL4A." evidence="23">
    <original>D</original>
    <variation>H</variation>
    <location>
        <position position="1088"/>
    </location>
</feature>
<feature type="sequence conflict" description="In Ref. 3; BAG65616." evidence="39" ref="3">
    <original>K</original>
    <variation>R</variation>
    <location>
        <position position="43"/>
    </location>
</feature>
<feature type="sequence conflict" description="In Ref. 1; AAA35587." evidence="39" ref="1">
    <original>A</original>
    <variation>R</variation>
    <location>
        <position position="47"/>
    </location>
</feature>
<feature type="sequence conflict" description="In Ref. 3; BAG65616." evidence="39" ref="3">
    <original>H</original>
    <variation>D</variation>
    <location>
        <position position="150"/>
    </location>
</feature>
<feature type="sequence conflict" description="In Ref. 3; BAG65616." evidence="39" ref="3">
    <original>Q</original>
    <variation>R</variation>
    <location>
        <position position="511"/>
    </location>
</feature>
<feature type="sequence conflict" description="In Ref. 3; BAG65616." evidence="39" ref="3">
    <original>G</original>
    <variation>D</variation>
    <location>
        <position position="561"/>
    </location>
</feature>
<feature type="sequence conflict" description="In Ref. 3; BAG65616." evidence="39" ref="3">
    <original>P</original>
    <variation>L</variation>
    <location>
        <position position="617"/>
    </location>
</feature>
<feature type="sequence conflict" description="In Ref. 3; BAG65616." evidence="39" ref="3">
    <original>G</original>
    <variation>R</variation>
    <location>
        <position position="679"/>
    </location>
</feature>
<feature type="sequence conflict" description="In Ref. 3; BAG63924." evidence="39" ref="3">
    <original>L</original>
    <variation>R</variation>
    <location>
        <position position="839"/>
    </location>
</feature>
<feature type="sequence conflict" description="In Ref. 3; BAG63924." evidence="39" ref="3">
    <original>L</original>
    <variation>P</variation>
    <location>
        <position position="842"/>
    </location>
</feature>
<feature type="sequence conflict" description="In Ref. 2; CAI46045." evidence="39" ref="2">
    <original>V</original>
    <variation>M</variation>
    <location>
        <position position="853"/>
    </location>
</feature>
<feature type="sequence conflict" description="In Ref. 3; BAG65616." evidence="39" ref="3">
    <original>L</original>
    <variation>Q</variation>
    <location>
        <position position="854"/>
    </location>
</feature>
<feature type="sequence conflict" description="In Ref. 3; BAG65616." evidence="39" ref="3">
    <original>E</original>
    <variation>D</variation>
    <location>
        <position position="927"/>
    </location>
</feature>
<feature type="strand" evidence="61">
    <location>
        <begin position="16"/>
        <end position="23"/>
    </location>
</feature>
<feature type="strand" evidence="61">
    <location>
        <begin position="28"/>
        <end position="34"/>
    </location>
</feature>
<feature type="strand" evidence="60">
    <location>
        <begin position="35"/>
        <end position="37"/>
    </location>
</feature>
<feature type="helix" evidence="61">
    <location>
        <begin position="39"/>
        <end position="50"/>
    </location>
</feature>
<feature type="helix" evidence="61">
    <location>
        <begin position="54"/>
        <end position="56"/>
    </location>
</feature>
<feature type="strand" evidence="61">
    <location>
        <begin position="57"/>
        <end position="61"/>
    </location>
</feature>
<feature type="strand" evidence="60">
    <location>
        <begin position="64"/>
        <end position="66"/>
    </location>
</feature>
<feature type="strand" evidence="59">
    <location>
        <begin position="68"/>
        <end position="71"/>
    </location>
</feature>
<feature type="helix" evidence="61">
    <location>
        <begin position="72"/>
        <end position="75"/>
    </location>
</feature>
<feature type="strand" evidence="61">
    <location>
        <begin position="80"/>
        <end position="86"/>
    </location>
</feature>
<feature type="turn" evidence="60">
    <location>
        <begin position="91"/>
        <end position="93"/>
    </location>
</feature>
<feature type="helix" evidence="63">
    <location>
        <begin position="1009"/>
        <end position="1013"/>
    </location>
</feature>
<feature type="helix" evidence="63">
    <location>
        <begin position="1016"/>
        <end position="1018"/>
    </location>
</feature>
<feature type="helix" evidence="63">
    <location>
        <begin position="1019"/>
        <end position="1028"/>
    </location>
</feature>
<feature type="helix" evidence="63">
    <location>
        <begin position="1040"/>
        <end position="1043"/>
    </location>
</feature>
<feature type="helix" evidence="62">
    <location>
        <begin position="1063"/>
        <end position="1074"/>
    </location>
</feature>
<feature type="helix" evidence="62">
    <location>
        <begin position="1082"/>
        <end position="1089"/>
    </location>
</feature>
<feature type="helix" evidence="62">
    <location>
        <begin position="1092"/>
        <end position="1110"/>
    </location>
</feature>
<feature type="modified residue" description="Phosphoserine" evidence="52">
    <location sequence="P46379-4">
        <position position="832"/>
    </location>
</feature>